<sequence length="2768" mass="304790">MALVLEIFTLLASICWVSANIFEYQVDAQPLRPCELQRETAFLKQADYVPQCAEDGSFQTVQCQNDGRSCWCVGANGSEVLGSRQPGRPVACLSFCQLQKQQILLSGYINSTDTSYLPQCQDSGDYAPVQCDVQQVQCWCVDAEGMEVYGTRQLGRPKRCPRSCEIRNRRLLHGVGDKSPPQCSAEGEFMPVQCKFVNTTDMMIFDLVHSYNRFPDAFVTFSSFQRRFPEVSGYCHCADSQGRELAETGLELLLDEIYDTIFAGLDLPSTFTETTLYRILQRRFLAVQSVISGRFRCPTKCEVERFTATSFGHPYVPSCRRNGDYQAVQCQTEGPCWCVDAQGKEMHGTRQQGEPPSCAEGQSCASERQQALSRLYFGTSGYFSQHDLFSSPEKRWASPRVARFATSCPPTIKELFVDSGLLRPMVEGQSQQFSVSENLLKEAIRAIFPSRGLARLALQFTTNPKRLQQNLFGGKFLVNVGQFNLSGALGTRGTFNFSQFFQQLGLASFLNGGRQEDLAKPLSVGLDSNSSTGTPEAAKKDGTMNKPTVGSFGFEINLQENQNALKFLASLLELPEFLLFLQHAISVPEDVARDLGDVMETVLSSQTCEQTPERLFVPSCTTEGSYEDVQCFSGECWCVNSWGKELPGSRVRGGQPRCPTDCEKQRARMQSLMGSQPAGSTLFVPACTSEGHFLPVQCFNSECYCVDAEGQAIPGTRSAIGKPKKCPTPCQLQSEQAFLRTVQALLSNSSMLPTLSDTYIPQCSTDGQWRQVQCNGPPEQVFELYQRWEAQNKGQDLTPAKLLVKIMSYREAASGNFSLFIQSLYEAGQQDVFPVLSQYPSLQDVPLAALEGKRPQPRENILLEPYLFWQILNGQLSQYPGSYSDFSTPLAHFDLRNCWCVDEAGQELEGMRSEPSKLPTCPGSCEEAKLRVLQFIRETEEIVSASNSSRFPLGESFLVAKGIRLRNEDLGLPPLFPPREAFAEQFLRGSDYAIRLAAQSTLSFYQRRRFSPDDSAGASALLRSGPYMPQCDAFGSWEPVQCHAGTGHCWCVDEKGGFIPGSLTARSLQIPQCPTTCEKSRTSGLLSSWKQARSQENPSPKDLFVPACLETGEYARLQASGAGTWCVDPASGEELRPGSSSSAQCPSLCNVLKSGVLSRRVSPGYVPACRAEDGGFSPVQCDQAQGSCWCVMDSGEEVPGTRVTGGQPACESPRCPLPFNASEVVGGTILCETISGPTGSAMQQCQLLCRQGSWSVFPPGPLICSLESGRWESQLPQPRACQRPQLWQTIQTQGHFQLQLPPGKMCSADYADLLQTFQVFILDELTARGFCQIQVKTFGTLVSIPVCNNSSVQVGCLTRERLGVNVTWKSRLEDIPVASLPDLHDIERALVGKDLLGRFTDLIQSGSFQLHLDSKTFPAETIRFLQGDHFGTSPRTWFGCSEGFYQVLTSEASQDGLGCVKCPEGSYSQDEECIPCPVGFYQEQAGSLACVPCPVGRTTISAGAFSQTHCVTDCQRNEAGLQCDQNGQYRASQKDRGSGKAFCVDGEGRRLPWWETEAPLEDSQCLMMQKFEKVPESKVIFDANAPVAVRSKVPDSEFPVMQCLTDCTEDEACSFFTVSTTEPEISCDFYAWTSDNVACMTSDQKRDALGNSKATSFGSLRCQVKVRSHGQDSPAVYLKKGQGSTTTLQKRFEPTGFQNMLSGLYNPIVFSASGANLTDAHLFCLLACDRDLCCDGFVLTQVQGGAIICGLLSSPSVLLCNVKDWMDPSEAWANATCPGVTYDQESHQVILRLGDQEFIKSLTPLEGTQDTFTNFQQVYLWKDSDMGSRPESMGCRKDTVPRPASPTEAGLTTELFSPVDLNQVIVNGNQSLSSQKHWLFKHLFSAQQANLWCLSRCVQEHSFCQLAEITESASLYFTCTLYPEAQVCDDIMESNAQGCRLILPQMPKALFRKKVILEDKVKNFYTRLPFQKLMGISIRNKVPMSEKSISNGFFECERRCDADPCCTGFGFLNVSQLKGGEVTCLTLNSLGIQMCSEENGGAWRILDCGSPDIEVHTYPFGWYQKPIAQNNAPSFCPLVVLPSLTEKVSLDSWQSLALSSVVVDPSIRHFDVAHVSTAATSNFSAVRDLCLSECSQHEACLITTLQTQPGAVRCMFYADTQSCTHSLQGQNCRLLLREEATHIYRKPGISLLSYEASVPSVPISTHGRLLGRSQAIQVGTSWKQVDQFLGVPYAAPPLAERRFQAPEPLNWTGSWDASKPRASCWQPGTRTSTSPGVSEDCLYLNVFIPQNVAPNASVLVFFHNTMDREESEGWPAIDGSFLAAVGNLIVVTASYRVGVFGFLSSGSGEVSGNWGLLDQVAALTWVQTHIRGFGGDPRRVSLAADRGGADVASIHLLTARATNSQLFRRAVLMGGSALSPAAVISHERAQQQAIALAKEVSCPMSSSQEVVSCLRQKPANVLNDAQTKLLAVSGPFHYWGPVIDGHFLREPPARALKRSLWVEVDLLIGSSQDDGLINRAKAVKQFEESRGRTSSKTAFYQALQNSLGGEDSDARVEAAATWYYSLEHSTDDYASFSRALENATRDYFIICPIIDMASAWAKRARGNVFMYHAPENYGHGSLELLADVQFALGLPFYPAYEGQFSLEEKSLSLKIMQYFSHFIRSGNPNYPYEFSRKVPTFATPWPDFVPRAGGENYKEFSELLPNRQGLKKADCSFWSKYISSLKTSADGAKGGQSAESEEEELTAGSGLREDLLSLQEPGSKTYSK</sequence>
<reference key="1">
    <citation type="journal article" date="1987" name="Eur. J. Biochem.">
        <title>Primary structure of human thyroglobulin deduced from the sequence of its 8448-base complementary DNA.</title>
        <authorList>
            <person name="Malthiery Y."/>
            <person name="Lissitzky S."/>
        </authorList>
    </citation>
    <scope>NUCLEOTIDE SEQUENCE [MRNA] (ISOFORM 1)</scope>
    <scope>VARIANTS ASP-604; ASP-653; GLN-985 DEL; TYR-1043; THR-1059; GLY-1312; ARG-1437; HIS-1463; THR-1936; GLU-2091; LEU-2149; ARG-2170 AND HIS-2242</scope>
</reference>
<reference key="2">
    <citation type="journal article" date="1997" name="Eur. J. Endocrinol.">
        <title>The revised 8307 base pair coding sequence of human thyroglobulin transiently expressed in eukaryotic cells.</title>
        <authorList>
            <person name="van de Graaf S.A.R."/>
            <person name="Pauws E."/>
            <person name="de Vijlder J.J.M."/>
            <person name="Ris-Stalpers C."/>
        </authorList>
    </citation>
    <scope>NUCLEOTIDE SEQUENCE [MRNA] (ISOFORM 1)</scope>
    <scope>VARIANT GLY-1312</scope>
    <source>
        <tissue>Thyroid</tissue>
    </source>
</reference>
<reference key="3">
    <citation type="journal article" date="2006" name="Nature">
        <title>DNA sequence and analysis of human chromosome 8.</title>
        <authorList>
            <person name="Nusbaum C."/>
            <person name="Mikkelsen T.S."/>
            <person name="Zody M.C."/>
            <person name="Asakawa S."/>
            <person name="Taudien S."/>
            <person name="Garber M."/>
            <person name="Kodira C.D."/>
            <person name="Schueler M.G."/>
            <person name="Shimizu A."/>
            <person name="Whittaker C.A."/>
            <person name="Chang J.L."/>
            <person name="Cuomo C.A."/>
            <person name="Dewar K."/>
            <person name="FitzGerald M.G."/>
            <person name="Yang X."/>
            <person name="Allen N.R."/>
            <person name="Anderson S."/>
            <person name="Asakawa T."/>
            <person name="Blechschmidt K."/>
            <person name="Bloom T."/>
            <person name="Borowsky M.L."/>
            <person name="Butler J."/>
            <person name="Cook A."/>
            <person name="Corum B."/>
            <person name="DeArellano K."/>
            <person name="DeCaprio D."/>
            <person name="Dooley K.T."/>
            <person name="Dorris L. III"/>
            <person name="Engels R."/>
            <person name="Gloeckner G."/>
            <person name="Hafez N."/>
            <person name="Hagopian D.S."/>
            <person name="Hall J.L."/>
            <person name="Ishikawa S.K."/>
            <person name="Jaffe D.B."/>
            <person name="Kamat A."/>
            <person name="Kudoh J."/>
            <person name="Lehmann R."/>
            <person name="Lokitsang T."/>
            <person name="Macdonald P."/>
            <person name="Major J.E."/>
            <person name="Matthews C.D."/>
            <person name="Mauceli E."/>
            <person name="Menzel U."/>
            <person name="Mihalev A.H."/>
            <person name="Minoshima S."/>
            <person name="Murayama Y."/>
            <person name="Naylor J.W."/>
            <person name="Nicol R."/>
            <person name="Nguyen C."/>
            <person name="O'Leary S.B."/>
            <person name="O'Neill K."/>
            <person name="Parker S.C.J."/>
            <person name="Polley A."/>
            <person name="Raymond C.K."/>
            <person name="Reichwald K."/>
            <person name="Rodriguez J."/>
            <person name="Sasaki T."/>
            <person name="Schilhabel M."/>
            <person name="Siddiqui R."/>
            <person name="Smith C.L."/>
            <person name="Sneddon T.P."/>
            <person name="Talamas J.A."/>
            <person name="Tenzin P."/>
            <person name="Topham K."/>
            <person name="Venkataraman V."/>
            <person name="Wen G."/>
            <person name="Yamazaki S."/>
            <person name="Young S.K."/>
            <person name="Zeng Q."/>
            <person name="Zimmer A.R."/>
            <person name="Rosenthal A."/>
            <person name="Birren B.W."/>
            <person name="Platzer M."/>
            <person name="Shimizu N."/>
            <person name="Lander E.S."/>
        </authorList>
    </citation>
    <scope>NUCLEOTIDE SEQUENCE [LARGE SCALE GENOMIC DNA]</scope>
    <scope>VARIANT GLU-515</scope>
</reference>
<reference key="4">
    <citation type="journal article" date="1985" name="Eur. J. Biochem.">
        <title>Sequence of the 5'-end quarter of the human-thyroglobulin messenger ribonucleic acid and of its deduced amino-acid sequence.</title>
        <authorList>
            <person name="Malthiery Y."/>
            <person name="Lissitzky S."/>
        </authorList>
    </citation>
    <scope>NUCLEOTIDE SEQUENCE [MRNA] OF 1-730</scope>
    <scope>VARIANTS ASP-604 AND ASP-653</scope>
</reference>
<reference key="5">
    <citation type="journal article" date="1987" name="J. Mol. Biol.">
        <title>Structural organization of the 5' region of the thyroglobulin gene. Evidence for intron loss and 'exonization' during evolution.</title>
        <authorList>
            <person name="Parma J."/>
            <person name="Christophe D."/>
            <person name="Pohl V."/>
            <person name="Vassart G."/>
        </authorList>
    </citation>
    <scope>NUCLEOTIDE SEQUENCE [GENOMIC DNA] OF 1-415; 640-737 AND 880-1000</scope>
    <scope>VARIANT ALA-734</scope>
</reference>
<reference key="6">
    <citation type="journal article" date="1985" name="Nucleic Acids Res.">
        <title>An unusually long poly(purine)-poly(pyrimidine) sequence is located upstream from the human thyroglobulin gene.</title>
        <authorList>
            <person name="Christophe D."/>
            <person name="Cabrer B."/>
            <person name="Bacolla A."/>
            <person name="Targovnik H.M."/>
            <person name="Pohl V."/>
            <person name="Vassart G."/>
        </authorList>
    </citation>
    <scope>NUCLEOTIDE SEQUENCE [GENOMIC DNA] OF 1-25</scope>
</reference>
<reference key="7">
    <citation type="journal article" date="2000" name="Eur. J. Endocrinol.">
        <title>Genomic organization of the 5' region of the human thyroglobulin gene.</title>
        <authorList>
            <person name="Moya C.M."/>
            <person name="Mendive F.M."/>
            <person name="Rivolta C.M."/>
            <person name="Vassart G."/>
            <person name="Targovnik H.M."/>
        </authorList>
    </citation>
    <scope>NUCLEOTIDE SEQUENCE [GENOMIC DNA] OF 1002-1566 (ISOFORM 1)</scope>
    <scope>VARIANT GLY-1312</scope>
</reference>
<reference key="8">
    <citation type="journal article" date="1999" name="Thyroid">
        <title>Genomic organization of the 3' region of the human thyroglobulin gene.</title>
        <authorList>
            <person name="Mendive F.M."/>
            <person name="Rivolta C.M."/>
            <person name="Vassart G."/>
            <person name="Targovnik H.M."/>
        </authorList>
    </citation>
    <scope>NUCLEOTIDE SEQUENCE [GENOMIC DNA] OF 1645-2768</scope>
    <scope>VARIANTS LEU-2149 AND ARG-2170</scope>
</reference>
<reference key="9">
    <citation type="journal article" date="1992" name="Mol. Cell. Endocrinol.">
        <title>Identification of a minor Tg mRNA transcript in RNA from normal and goitrous thyroids.</title>
        <authorList>
            <person name="Targovnik H.M."/>
            <person name="Cochaux P."/>
            <person name="Corach D."/>
            <person name="Vassart G."/>
        </authorList>
    </citation>
    <scope>NUCLEOTIDE SEQUENCE [MRNA] OF 1504-1602 (ISOFORM 2)</scope>
</reference>
<reference key="10">
    <citation type="journal article" date="1989" name="FEBS Lett.">
        <title>Hormone synthesis in human thyroglobulin: possible cleavage of the polypeptide chain at the tyrosine donor site.</title>
        <authorList>
            <person name="Marriq C."/>
            <person name="Lejeune P.J."/>
            <person name="Venot N."/>
            <person name="Vinet L."/>
        </authorList>
    </citation>
    <scope>PARTIAL PROTEIN SEQUENCE</scope>
</reference>
<reference key="11">
    <citation type="journal article" date="1993" name="Eur. J. Biochem.">
        <title>Preferential sites of proteolytic cleavage of bovine, human and rat thyroglobulin. The use of limited proteolysis to detect solvent-exposed regions of the primary structure.</title>
        <authorList>
            <person name="Gentile F."/>
            <person name="Salvatore G."/>
        </authorList>
    </citation>
    <scope>PARTIAL PROTEIN SEQUENCE</scope>
</reference>
<reference key="12">
    <citation type="journal article" date="1995" name="Arch. Biochem. Biophys.">
        <title>Characterization of hormonogenic sites in an N-terminal, cyanogen bromide fragment of human thyroglobulin.</title>
        <authorList>
            <person name="Xiao S."/>
            <person name="Pollock H.G."/>
            <person name="Taurog A."/>
            <person name="Rawitch A.B."/>
        </authorList>
    </citation>
    <scope>PARTIAL PROTEIN SEQUENCE</scope>
</reference>
<reference key="13">
    <citation type="journal article" date="1996" name="Arch. Biochem. Biophys.">
        <title>Glycosylation in human thyroglobulin: location of the N-linked oligosaccharide units and comparison with bovine thyroglobulin.</title>
        <authorList>
            <person name="Yang S.X."/>
            <person name="Pollock H.G."/>
            <person name="Rawitch A.B."/>
        </authorList>
    </citation>
    <scope>PARTIAL PROTEIN SEQUENCE</scope>
    <scope>GLYCOSYLATION AT ASN-76; ASN-198; ASN-484; ASN-529; ASN-748; ASN-816; ASN-947; ASN-1220; ASN-1348; ASN-1349; ASN-1365; ASN-1716; ASN-1774; ASN-2013; ASN-2250; ASN-2295 AND ASN-2582</scope>
    <scope>LACK OF GLYCOSYLATION AT ASN-110; ASN-496; ASN-1869 AND ASN-2122</scope>
</reference>
<reference key="14">
    <citation type="journal article" date="1989" name="J. Biol. Chem.">
        <title>Consensus sequences for early iodination and hormonogenesis in human thyroglobulin.</title>
        <authorList>
            <person name="Lamas L."/>
            <person name="Anderson P.C."/>
            <person name="Fox J.W."/>
            <person name="Dunn J.T."/>
        </authorList>
    </citation>
    <scope>IODINATION AT TYR-24; TYR-149; TYR-258; TYR-704; TYR-785; TYR-866; TYR-883; TYR-992; TYR-1310; TYR-1467; TYR-2184; TYR-2573; TYR-2587; TYR-2617; TYR-2697 AND TYR-2766</scope>
</reference>
<reference key="15">
    <citation type="journal article" date="1996" name="Eur. J. Biochem.">
        <title>Characterization of the type-1 repeat from thyroglobulin, a cysteine-rich module found in proteins from different families.</title>
        <authorList>
            <person name="Molina F."/>
            <person name="Bouanani M."/>
            <person name="Pau B."/>
            <person name="Granier C."/>
        </authorList>
    </citation>
    <scope>PRESENCE OF 11TH THYROGLOBULIN TYPE-1 REPEAT</scope>
</reference>
<reference key="16">
    <citation type="journal article" date="1996" name="J. Clin. Endocrinol. Metab.">
        <title>Multimerization of thyroglobulin (TG) during extracellular storage: isolation of highly cross-linked TG from human thyroids.</title>
        <authorList>
            <person name="Berndorfer U."/>
            <person name="Wilms H."/>
            <person name="Herzog V."/>
        </authorList>
    </citation>
    <scope>SUBUNIT</scope>
    <scope>SUBCELLULAR LOCATION</scope>
    <scope>TISSUE SPECIFICITY</scope>
    <scope>DISULFIDE BOND</scope>
</reference>
<reference key="17">
    <citation type="journal article" date="1999" name="Biochem. Biophys. Res. Commun.">
        <title>Sulfated tyrosines of thyroglobulin are involved in thyroid hormone synthesis.</title>
        <authorList>
            <person name="Nlend M.-C."/>
            <person name="Cauvi D."/>
            <person name="Venot N."/>
            <person name="Chabaud O."/>
        </authorList>
    </citation>
    <scope>SULFATION</scope>
</reference>
<reference key="18">
    <citation type="journal article" date="2000" name="J. Cell Sci.">
        <title>Cathepsin K in thyroid epithelial cells: sequence, localization and possible function in extracellular proteolysis of thyroglobulin.</title>
        <authorList>
            <person name="Tepel C."/>
            <person name="Broemme D."/>
            <person name="Herzog V."/>
            <person name="Brix K."/>
        </authorList>
    </citation>
    <scope>SUBCELLULAR LOCATION</scope>
    <scope>TISSUE SPECIFICITY</scope>
    <source>
        <tissue>Thyroid</tissue>
    </source>
</reference>
<reference key="19">
    <citation type="journal article" date="2006" name="J. Biol. Chem.">
        <title>A single chondroitin 6-sulfate oligosaccharide unit at Ser-2730 of human thyroglobulin enhances hormone formation and limits proteolytic accessibility at the carboxyl terminus. Potential insights into thyroid homeostasis and autoimmunity.</title>
        <authorList>
            <person name="Conte M."/>
            <person name="Arcaro A."/>
            <person name="D'Angelo D."/>
            <person name="Gnata A."/>
            <person name="Mamone G."/>
            <person name="Ferranti P."/>
            <person name="Formisano S."/>
            <person name="Gentile F."/>
        </authorList>
    </citation>
    <scope>GLYCOSYLATION AT SER-2749</scope>
</reference>
<reference key="20">
    <citation type="journal article" date="2020" name="Nature">
        <title>The structure of human thyroglobulin.</title>
        <authorList>
            <person name="Coscia F."/>
            <person name="Taler-Vercic A."/>
            <person name="Chang V.T."/>
            <person name="Sinn L."/>
            <person name="O'Reilly F.J."/>
            <person name="Izore T."/>
            <person name="Renko M."/>
            <person name="Berger I."/>
            <person name="Rappsilber J."/>
            <person name="Turk D."/>
            <person name="Loewe J."/>
        </authorList>
    </citation>
    <scope>STRUCTURE BY ELECTRON MICROSCOPY (3.6 ANGSTROMS)</scope>
    <scope>FUNCTION</scope>
    <scope>SUBUNIT</scope>
    <scope>DISULFIDE BONDS</scope>
    <scope>GLYCOSYLATION AT ASN-76; ASN-110; ASN-198; ASN-484; ASN-947; ASN-1220; ASN-1349; ASN-1365; ASN-1716; ASN-1774; ASN-1869; ASN-2013; ASN-2122; ASN-2250; ASN-2295 AND ASN-2582</scope>
    <scope>IODINATION AT TYR-24; TYR-108; TYR-149; TYR-234; TYR-1310; TYR-2540; TYR-2573 AND TYR-2766</scope>
    <scope>MUTAGENESIS OF TYR-24; TYR-108; TYR-149; TYR-234; ASP-1309; TYR-1310; TYR-2540; TYR-2573 AND TYR-2766</scope>
</reference>
<reference key="21">
    <citation type="journal article" date="1993" name="Lancet">
        <title>Thyroglobulin gene point mutation associated with non-endemic simple goitre.</title>
        <authorList>
            <person name="Corral J."/>
            <person name="Martin C."/>
            <person name="Perez R."/>
            <person name="Sanchez I."/>
            <person name="Mories M.T."/>
            <person name="San Millan J.L."/>
            <person name="Miralles J.M."/>
            <person name="Gonzalez-Sarmiento R."/>
        </authorList>
    </citation>
    <scope>VARIANT HIS-870</scope>
</reference>
<reference key="22">
    <citation type="journal article" date="1999" name="J. Clin. Endocrinol. Metab.">
        <title>Two novel cysteine substitutions (C1263R and C1995S) of thyroglobulin cause a defect in intracellular transport of thyroglobulin in patients with congenital goiter and the variant type of adenomatous goiter.</title>
        <authorList>
            <person name="Hishinuma A."/>
            <person name="Takamatsu J."/>
            <person name="Ohyama Y."/>
            <person name="Yokozawa T."/>
            <person name="Kanno Y."/>
            <person name="Kuma K."/>
            <person name="Yoshida S."/>
            <person name="Matsuura N."/>
            <person name="Ieiri T."/>
        </authorList>
    </citation>
    <scope>VARIANTS AITD3 ALA-734 AND VAL-1028</scope>
    <scope>VARIANTS TDH3 ARG-1264; SER-1996 AND TRP-1999</scope>
    <scope>VARIANTS HIS-135; ASP-604; ASP-653; GLU-830; GLN-985 DEL; TYR-1043; THR-1059; ARG-1437; HIS-1463; ASN-1838; THR-1936; GLU-2091; LEU-2149; ARG-2170; HIS-2242; ARG-2501 AND GLN-2530</scope>
</reference>
<reference key="23">
    <citation type="journal article" date="2003" name="Proc. Natl. Acad. Sci. U.S.A.">
        <title>Amino acid substitutions in the thyroglobulin gene are associated with susceptibility to human and murine autoimmune thyroid disease.</title>
        <authorList>
            <person name="Ban Y."/>
            <person name="Greenberg D.A."/>
            <person name="Concepcion E."/>
            <person name="Skrabanek L."/>
            <person name="Villanueva R."/>
            <person name="Tomer Y."/>
        </authorList>
    </citation>
    <scope>VARIANTS AITD3 ALA-734; VAL-1028 AND TRP-1999</scope>
    <scope>INVOLVEMENT IN AITD3</scope>
</reference>
<reference key="24">
    <citation type="journal article" date="2006" name="J. Hum. Genet.">
        <title>A novel compound heterozygous mutation in the thyroglobulin gene resulting in congenital goitrous hypothyroidism with high serum triiodothyronine levels.</title>
        <authorList>
            <person name="Kitanaka S."/>
            <person name="Takeda A."/>
            <person name="Sato U."/>
            <person name="Miki Y."/>
            <person name="Hishinuma A."/>
            <person name="Ieiri T."/>
            <person name="Igarashi T."/>
        </authorList>
    </citation>
    <scope>VARIANTS TDH3 TYR-1897 AND GLN-2336</scope>
</reference>
<reference key="25">
    <citation type="journal article" date="2007" name="Clin. Endocrinol. (Oxf.)">
        <title>Congenital hypothyroidism with goitre caused by new mutations in the thyroglobulin gene.</title>
        <authorList>
            <person name="Caputo M."/>
            <person name="Rivolta C.M."/>
            <person name="Esperante S.A."/>
            <person name="Gruneiro-Papendieck L."/>
            <person name="Chiesa A."/>
            <person name="Pellizas C.G."/>
            <person name="Gonzalez-Sarmiento R."/>
            <person name="Targovnik H.M."/>
        </authorList>
    </citation>
    <scope>VARIANTS TDH3 TYR-183 AND ASP-2234</scope>
    <scope>FUNCTION</scope>
</reference>
<reference key="26">
    <citation type="journal article" date="2007" name="J. Clin. Endocrinol. Metab.">
        <title>Thyroglobulin gene mutations producing defective intracellular transport of thyroglobulin are associated with increased thyroidal type 2 iodothyronine deiodinase activity.</title>
        <authorList>
            <person name="Kanou Y."/>
            <person name="Hishinuma A."/>
            <person name="Tsunekawa K."/>
            <person name="Seki K."/>
            <person name="Mizuno Y."/>
            <person name="Fujisawa H."/>
            <person name="Imai T."/>
            <person name="Miura Y."/>
            <person name="Nagasaka T."/>
            <person name="Yamada C."/>
            <person name="Ieiri T."/>
            <person name="Murakami M."/>
            <person name="Murata Y."/>
        </authorList>
    </citation>
    <scope>VARIANT TDH3 ARG-2375</scope>
</reference>
<reference key="27">
    <citation type="journal article" date="2009" name="J. Clin. Endocrinol. Metab.">
        <title>The p.A2215D thyroglobulin gene mutation leads to deficient synthesis and secretion of the mutated protein and congenital hypothyroidism with wide phenotype variation.</title>
        <authorList>
            <person name="Pardo V."/>
            <person name="Vono-Toniolo J."/>
            <person name="Rubio I.G."/>
            <person name="Knobel M."/>
            <person name="Possato R.F."/>
            <person name="Targovnik H.M."/>
            <person name="Kopp P."/>
            <person name="Medeiros-Neto G."/>
        </authorList>
    </citation>
    <scope>VARIANT TDH3 ASP-2234</scope>
    <scope>CHARACTERIZATION OF VARIANT TDH3 ASP-2234</scope>
    <scope>SUBCELLULAR LOCATION</scope>
    <scope>TISSUE SPECIFICITY</scope>
</reference>
<reference key="28">
    <citation type="journal article" date="2016" name="J. Hum. Genet.">
        <title>Mutations in the genes for thyroglobulin and thyroid peroxidase cause thyroid dyshormonogenesis and autosomal-recessive intellectual disability.</title>
        <authorList>
            <person name="Mittal K."/>
            <person name="Rafiq M.A."/>
            <person name="Rafiullah R."/>
            <person name="Harripaul R."/>
            <person name="Ali H."/>
            <person name="Ayaz M."/>
            <person name="Aslam M."/>
            <person name="Naeem F."/>
            <person name="Amin-Ud-Din M."/>
            <person name="Waqas A."/>
            <person name="So J."/>
            <person name="Rappold G.A."/>
            <person name="Vincent J.B."/>
            <person name="Ayub M."/>
        </authorList>
    </citation>
    <scope>VARIANT TDH3 2336-ARG--LYS-2768 DEL</scope>
</reference>
<feature type="signal peptide" evidence="1">
    <location>
        <begin position="1"/>
        <end position="19"/>
    </location>
</feature>
<feature type="chain" id="PRO_0000008636" description="Thyroglobulin">
    <location>
        <begin position="20"/>
        <end position="2768"/>
    </location>
</feature>
<feature type="domain" description="Thyroglobulin type-1 1" evidence="3">
    <location>
        <begin position="31"/>
        <end position="92"/>
    </location>
</feature>
<feature type="domain" description="Thyroglobulin type-1 2" evidence="3">
    <location>
        <begin position="93"/>
        <end position="160"/>
    </location>
</feature>
<feature type="domain" description="Thyroglobulin type-1 3" evidence="3">
    <location>
        <begin position="161"/>
        <end position="297"/>
    </location>
</feature>
<feature type="domain" description="Thyroglobulin type-1 4" evidence="3">
    <location>
        <begin position="298"/>
        <end position="358"/>
    </location>
</feature>
<feature type="domain" description="Thyroglobulin type-1 5" evidence="3">
    <location>
        <begin position="605"/>
        <end position="658"/>
    </location>
</feature>
<feature type="domain" description="Thyroglobulin type-1 6" evidence="3">
    <location>
        <begin position="659"/>
        <end position="726"/>
    </location>
</feature>
<feature type="domain" description="Thyroglobulin type-1 7" evidence="3">
    <location>
        <begin position="727"/>
        <end position="921"/>
    </location>
</feature>
<feature type="domain" description="Thyroglobulin type-1 8" evidence="3">
    <location>
        <begin position="922"/>
        <end position="1073"/>
    </location>
</feature>
<feature type="domain" description="Thyroglobulin type-1 9" evidence="3">
    <location>
        <begin position="1074"/>
        <end position="1145"/>
    </location>
</feature>
<feature type="domain" description="Thyroglobulin type-1 10" evidence="3">
    <location>
        <begin position="1146"/>
        <end position="1210"/>
    </location>
</feature>
<feature type="repeat" description="Type II" evidence="26">
    <location>
        <begin position="1456"/>
        <end position="1469"/>
    </location>
</feature>
<feature type="repeat" description="Type II" evidence="26">
    <location>
        <begin position="1470"/>
        <end position="1486"/>
    </location>
</feature>
<feature type="repeat" description="Type II" evidence="26">
    <location>
        <begin position="1487"/>
        <end position="1503"/>
    </location>
</feature>
<feature type="domain" description="Thyroglobulin type-1 11" evidence="3">
    <location>
        <begin position="1511"/>
        <end position="1565"/>
    </location>
</feature>
<feature type="repeat" description="Type IIIA" evidence="26">
    <location>
        <begin position="1603"/>
        <end position="1723"/>
    </location>
</feature>
<feature type="repeat" description="Type IIIB" evidence="26">
    <location>
        <begin position="1724"/>
        <end position="1892"/>
    </location>
</feature>
<feature type="repeat" description="Type IIIA" evidence="26">
    <location>
        <begin position="1893"/>
        <end position="1995"/>
    </location>
</feature>
<feature type="repeat" description="Type IIIB" evidence="26">
    <location>
        <begin position="1996"/>
        <end position="2129"/>
    </location>
</feature>
<feature type="repeat" description="Type IIIA" evidence="26">
    <location>
        <begin position="2130"/>
        <end position="2187"/>
    </location>
</feature>
<feature type="region of interest" description="Disordered" evidence="4">
    <location>
        <begin position="521"/>
        <end position="545"/>
    </location>
</feature>
<feature type="region of interest" description="Cholinesterase-like (ChEL)" evidence="2">
    <location>
        <begin position="2188"/>
        <end position="2768"/>
    </location>
</feature>
<feature type="region of interest" description="Disordered" evidence="4">
    <location>
        <begin position="2727"/>
        <end position="2768"/>
    </location>
</feature>
<feature type="site" description="Not glycosylated" evidence="24">
    <location>
        <position position="110"/>
    </location>
</feature>
<feature type="site" description="Not glycosylated" evidence="24">
    <location>
        <position position="496"/>
    </location>
</feature>
<feature type="site" description="Not glycosylated" evidence="24">
    <location>
        <position position="1869"/>
    </location>
</feature>
<feature type="site" description="Not glycosylated" evidence="24">
    <location>
        <position position="2122"/>
    </location>
</feature>
<feature type="modified residue" description="Iodotyrosine; alternate" evidence="18">
    <location>
        <position position="24"/>
    </location>
</feature>
<feature type="modified residue" description="Sulfotyrosine; alternate" evidence="1">
    <location>
        <position position="24"/>
    </location>
</feature>
<feature type="modified residue" description="Thyroxine; alternate" evidence="18 30">
    <location>
        <position position="24"/>
    </location>
</feature>
<feature type="modified residue" description="Triiodothyronine; alternate" evidence="18">
    <location>
        <position position="24"/>
    </location>
</feature>
<feature type="modified residue" description="Iodotyrosine" evidence="30">
    <location>
        <position position="108"/>
    </location>
</feature>
<feature type="modified residue" description="Diiodotyrosine; alternate" evidence="18">
    <location>
        <position position="149"/>
    </location>
</feature>
<feature type="modified residue" description="Iodotyrosine; alternate" evidence="18 30">
    <location>
        <position position="149"/>
    </location>
</feature>
<feature type="modified residue" description="Iodotyrosine" evidence="30">
    <location>
        <position position="234"/>
    </location>
</feature>
<feature type="modified residue" description="Iodotyrosine" evidence="18">
    <location>
        <position position="258"/>
    </location>
</feature>
<feature type="modified residue" description="Diiodotyrosine; alternate" evidence="18">
    <location>
        <position position="704"/>
    </location>
</feature>
<feature type="modified residue" description="Iodotyrosine; alternate" evidence="18">
    <location>
        <position position="704"/>
    </location>
</feature>
<feature type="modified residue" description="Thyroxine; alternate" evidence="18">
    <location>
        <position position="704"/>
    </location>
</feature>
<feature type="modified residue" description="Triiodothyronine; alternate" evidence="18">
    <location>
        <position position="704"/>
    </location>
</feature>
<feature type="modified residue" description="Iodotyrosine" evidence="18">
    <location>
        <position position="785"/>
    </location>
</feature>
<feature type="modified residue" description="Diiodotyrosine; alternate" evidence="18">
    <location>
        <position position="866"/>
    </location>
</feature>
<feature type="modified residue" description="Iodotyrosine; alternate" evidence="18">
    <location>
        <position position="866"/>
    </location>
</feature>
<feature type="modified residue" description="Diiodotyrosine" evidence="18">
    <location>
        <position position="883"/>
    </location>
</feature>
<feature type="modified residue" description="Diiodotyrosine; alternate" evidence="18">
    <location>
        <position position="992"/>
    </location>
</feature>
<feature type="modified residue" description="Iodotyrosine; alternate" evidence="18">
    <location>
        <position position="992"/>
    </location>
</feature>
<feature type="modified residue" description="Iodotyrosine" evidence="18">
    <location>
        <position position="1310"/>
    </location>
</feature>
<feature type="modified residue" description="Thyroxine" evidence="18 30">
    <location>
        <position position="1310"/>
    </location>
</feature>
<feature type="modified residue" description="Diiodotyrosine; alternate" evidence="18">
    <location>
        <position position="1467"/>
    </location>
</feature>
<feature type="modified residue" description="Iodotyrosine; alternate" evidence="18">
    <location>
        <position position="1467"/>
    </location>
</feature>
<feature type="modified residue" description="Iodotyrosine" evidence="18">
    <location>
        <position position="2184"/>
    </location>
</feature>
<feature type="modified residue" description="Iodotyrosine" evidence="30">
    <location>
        <position position="2540"/>
    </location>
</feature>
<feature type="modified residue" description="Diiodotyrosine; alternate" evidence="18">
    <location>
        <position position="2573"/>
    </location>
</feature>
<feature type="modified residue" description="Iodotyrosine; alternate" evidence="18">
    <location>
        <position position="2573"/>
    </location>
</feature>
<feature type="modified residue" description="Thyroxine; alternate" evidence="18 30">
    <location>
        <position position="2573"/>
    </location>
</feature>
<feature type="modified residue" description="Triiodothyronine; alternate" evidence="18">
    <location>
        <position position="2573"/>
    </location>
</feature>
<feature type="modified residue" description="Iodotyrosine" evidence="18">
    <location>
        <position position="2587"/>
    </location>
</feature>
<feature type="modified residue" description="Iodotyrosine" evidence="18">
    <location>
        <position position="2617"/>
    </location>
</feature>
<feature type="modified residue" description="Diiodotyrosine" evidence="18">
    <location>
        <position position="2697"/>
    </location>
</feature>
<feature type="modified residue" description="Diiodotyrosine; alternate" evidence="18">
    <location>
        <position position="2766"/>
    </location>
</feature>
<feature type="modified residue" description="Iodotyrosine; alternate" evidence="18">
    <location>
        <position position="2766"/>
    </location>
</feature>
<feature type="modified residue" description="Thyroxine; alternate" evidence="18 30">
    <location>
        <position position="2766"/>
    </location>
</feature>
<feature type="modified residue" description="Triiodothyronine; alternate" evidence="18">
    <location>
        <position position="2766"/>
    </location>
</feature>
<feature type="glycosylation site" description="N-linked (GlcNAc...) asparagine" evidence="19 24 33">
    <location>
        <position position="76"/>
    </location>
</feature>
<feature type="glycosylation site" description="N-linked (GlcNAc...) asparagine" evidence="19 33">
    <location>
        <position position="110"/>
    </location>
</feature>
<feature type="glycosylation site" description="N-linked (GlcNAc...) asparagine" evidence="19 24 33">
    <location>
        <position position="198"/>
    </location>
</feature>
<feature type="glycosylation site" description="N-linked (GlcNAc...) asparagine" evidence="19 24 33">
    <location>
        <position position="484"/>
    </location>
</feature>
<feature type="glycosylation site" description="N-linked (GlcNAc...) asparagine" evidence="24">
    <location>
        <position position="529"/>
    </location>
</feature>
<feature type="glycosylation site" description="N-linked (GlcNAc...) asparagine" evidence="24">
    <location>
        <position position="748"/>
    </location>
</feature>
<feature type="glycosylation site" description="N-linked (GlcNAc...) asparagine" evidence="24">
    <location>
        <position position="816"/>
    </location>
</feature>
<feature type="glycosylation site" description="N-linked (GlcNAc...) asparagine" evidence="19 24 33">
    <location>
        <position position="947"/>
    </location>
</feature>
<feature type="glycosylation site" description="N-linked (GlcNAc...) asparagine" evidence="19 24 33">
    <location>
        <position position="1220"/>
    </location>
</feature>
<feature type="glycosylation site" description="N-linked (GlcNAc...) asparagine" evidence="31">
    <location>
        <position position="1348"/>
    </location>
</feature>
<feature type="glycosylation site" description="N-linked (GlcNAc...) asparagine" evidence="19 24 33">
    <location>
        <position position="1349"/>
    </location>
</feature>
<feature type="glycosylation site" description="N-linked (GlcNAc...) asparagine" evidence="19 24 33">
    <location>
        <position position="1365"/>
    </location>
</feature>
<feature type="glycosylation site" description="N-linked (GlcNAc...) asparagine" evidence="19 24 33">
    <location>
        <position position="1716"/>
    </location>
</feature>
<feature type="glycosylation site" description="N-linked (GlcNAc...) asparagine" evidence="19 24 33">
    <location>
        <position position="1774"/>
    </location>
</feature>
<feature type="glycosylation site" description="N-linked (GlcNAc...) asparagine" evidence="19 33">
    <location>
        <position position="1869"/>
    </location>
</feature>
<feature type="glycosylation site" description="N-linked (GlcNAc...) asparagine" evidence="19 24 33">
    <location>
        <position position="2013"/>
    </location>
</feature>
<feature type="glycosylation site" description="N-linked (GlcNAc...) asparagine" evidence="19 33">
    <location>
        <position position="2122"/>
    </location>
</feature>
<feature type="glycosylation site" description="N-linked (GlcNAc...) asparagine" evidence="19 24 33">
    <location>
        <position position="2250"/>
    </location>
</feature>
<feature type="glycosylation site" description="N-linked (GlcNAc...) asparagine" evidence="19 24 33">
    <location>
        <position position="2295"/>
    </location>
</feature>
<feature type="glycosylation site" description="N-linked (GlcNAc...) asparagine" evidence="19 24 33">
    <location>
        <position position="2582"/>
    </location>
</feature>
<feature type="glycosylation site" description="O-linked (Xyl...) (chondroitin sulfate) serine" evidence="13">
    <location>
        <position position="2749"/>
    </location>
</feature>
<feature type="disulfide bond" evidence="3 19 33">
    <location>
        <begin position="34"/>
        <end position="52"/>
    </location>
</feature>
<feature type="disulfide bond" evidence="3 19 33">
    <location>
        <begin position="63"/>
        <end position="70"/>
    </location>
</feature>
<feature type="disulfide bond" evidence="3 19 33">
    <location>
        <begin position="72"/>
        <end position="92"/>
    </location>
</feature>
<feature type="disulfide bond" evidence="3 19 33">
    <location>
        <begin position="96"/>
        <end position="120"/>
    </location>
</feature>
<feature type="disulfide bond" evidence="3 19 33">
    <location>
        <begin position="131"/>
        <end position="138"/>
    </location>
</feature>
<feature type="disulfide bond" evidence="3 19 33">
    <location>
        <begin position="140"/>
        <end position="160"/>
    </location>
</feature>
<feature type="disulfide bond" evidence="3 19 33">
    <location>
        <begin position="164"/>
        <end position="183"/>
    </location>
</feature>
<feature type="disulfide bond" evidence="3 19 33">
    <location>
        <begin position="194"/>
        <end position="235"/>
    </location>
</feature>
<feature type="disulfide bond" evidence="19 33">
    <location>
        <begin position="237"/>
        <end position="297"/>
    </location>
</feature>
<feature type="disulfide bond" evidence="3 19 33">
    <location>
        <begin position="301"/>
        <end position="319"/>
    </location>
</feature>
<feature type="disulfide bond" evidence="3 19 33">
    <location>
        <begin position="330"/>
        <end position="336"/>
    </location>
</feature>
<feature type="disulfide bond" evidence="3 19 33">
    <location>
        <begin position="338"/>
        <end position="358"/>
    </location>
</feature>
<feature type="disulfide bond" evidence="19 33">
    <location>
        <begin position="364"/>
        <end position="620"/>
    </location>
</feature>
<feature type="disulfide bond" evidence="19 33">
    <location>
        <begin position="408"/>
        <end position="608"/>
    </location>
</feature>
<feature type="disulfide bond" evidence="3 19 33">
    <location>
        <begin position="631"/>
        <end position="636"/>
    </location>
</feature>
<feature type="disulfide bond" evidence="3 19 33">
    <location>
        <begin position="638"/>
        <end position="658"/>
    </location>
</feature>
<feature type="disulfide bond" evidence="3 19 33">
    <location>
        <begin position="662"/>
        <end position="687"/>
    </location>
</feature>
<feature type="disulfide bond" evidence="3 19 33">
    <location>
        <begin position="698"/>
        <end position="703"/>
    </location>
</feature>
<feature type="disulfide bond" evidence="3 19 33">
    <location>
        <begin position="705"/>
        <end position="726"/>
    </location>
</feature>
<feature type="disulfide bond" evidence="3 19 33">
    <location>
        <begin position="730"/>
        <end position="763"/>
    </location>
</feature>
<feature type="disulfide bond" evidence="3 19 33">
    <location>
        <begin position="774"/>
        <end position="898"/>
    </location>
</feature>
<feature type="disulfide bond" evidence="3 19 33">
    <location>
        <begin position="900"/>
        <end position="921"/>
    </location>
</feature>
<feature type="disulfide bond" evidence="19 33">
    <location>
        <begin position="925"/>
        <end position="1031"/>
    </location>
</feature>
<feature type="disulfide bond" evidence="3 19 33">
    <location>
        <begin position="1042"/>
        <end position="1049"/>
    </location>
</feature>
<feature type="disulfide bond" evidence="3 19 33">
    <location>
        <begin position="1051"/>
        <end position="1073"/>
    </location>
</feature>
<feature type="disulfide bond" evidence="3 19 33">
    <location>
        <begin position="1077"/>
        <end position="1108"/>
    </location>
</feature>
<feature type="disulfide bond" evidence="3 19 33">
    <location>
        <begin position="1126"/>
        <end position="1145"/>
    </location>
</feature>
<feature type="disulfide bond" evidence="3 19 33">
    <location>
        <begin position="1149"/>
        <end position="1169"/>
    </location>
</feature>
<feature type="disulfide bond" evidence="3 19 33">
    <location>
        <begin position="1181"/>
        <end position="1188"/>
    </location>
</feature>
<feature type="disulfide bond" evidence="3 19 33">
    <location>
        <begin position="1190"/>
        <end position="1210"/>
    </location>
</feature>
<feature type="disulfide bond" evidence="19 33">
    <location>
        <begin position="1215"/>
        <end position="1264"/>
    </location>
</feature>
<feature type="disulfide bond" evidence="19 33">
    <location>
        <begin position="1231"/>
        <end position="1245"/>
    </location>
</feature>
<feature type="disulfide bond" evidence="19 33">
    <location>
        <begin position="1306"/>
        <end position="1356"/>
    </location>
</feature>
<feature type="disulfide bond" evidence="19 33">
    <location>
        <begin position="1331"/>
        <end position="1347"/>
    </location>
</feature>
<feature type="disulfide bond" evidence="19 33">
    <location>
        <begin position="1440"/>
        <end position="1459"/>
    </location>
</feature>
<feature type="disulfide bond" evidence="19 33">
    <location>
        <begin position="1462"/>
        <end position="1473"/>
    </location>
</feature>
<feature type="disulfide bond" evidence="19 33">
    <location>
        <begin position="1476"/>
        <end position="1490"/>
    </location>
</feature>
<feature type="disulfide bond" evidence="19 33">
    <location>
        <begin position="1493"/>
        <end position="1510"/>
    </location>
</feature>
<feature type="disulfide bond" evidence="3 19 33">
    <location>
        <begin position="1514"/>
        <end position="1523"/>
    </location>
</feature>
<feature type="disulfide bond" evidence="3 19 33">
    <location>
        <begin position="1543"/>
        <end position="1565"/>
    </location>
</feature>
<feature type="disulfide bond" evidence="19 33">
    <location>
        <begin position="1603"/>
        <end position="1627"/>
    </location>
</feature>
<feature type="disulfide bond" evidence="19 33">
    <location>
        <begin position="1607"/>
        <end position="1613"/>
    </location>
</feature>
<feature type="disulfide bond" evidence="19 33">
    <location>
        <begin position="1639"/>
        <end position="1662"/>
    </location>
</feature>
<feature type="disulfide bond" evidence="19 33">
    <location>
        <begin position="1724"/>
        <end position="1749"/>
    </location>
</feature>
<feature type="disulfide bond" evidence="19 33">
    <location>
        <begin position="1728"/>
        <end position="1734"/>
    </location>
</feature>
<feature type="disulfide bond" evidence="19 33">
    <location>
        <begin position="1733"/>
        <end position="1835"/>
    </location>
</feature>
<feature type="disulfide bond" evidence="19 33">
    <location>
        <begin position="1760"/>
        <end position="1777"/>
    </location>
</feature>
<feature type="disulfide bond" evidence="19 33">
    <location>
        <begin position="1893"/>
        <end position="1919"/>
    </location>
</feature>
<feature type="disulfide bond" evidence="19 33">
    <location>
        <begin position="1897"/>
        <end position="1904"/>
    </location>
</feature>
<feature type="disulfide bond" evidence="19 33">
    <location>
        <begin position="1928"/>
        <end position="1939"/>
    </location>
</feature>
<feature type="disulfide bond" evidence="19 33">
    <location>
        <begin position="1996"/>
        <end position="2024"/>
    </location>
</feature>
<feature type="disulfide bond" evidence="19 33">
    <location>
        <begin position="2000"/>
        <end position="2006"/>
    </location>
</feature>
<feature type="disulfide bond" evidence="19 33">
    <location>
        <begin position="2005"/>
        <end position="2076"/>
    </location>
</feature>
<feature type="disulfide bond" evidence="19 33">
    <location>
        <begin position="2035"/>
        <end position="2048"/>
    </location>
</feature>
<feature type="disulfide bond" evidence="19 33">
    <location>
        <begin position="2130"/>
        <end position="2154"/>
    </location>
</feature>
<feature type="disulfide bond" evidence="19 33">
    <location>
        <begin position="2134"/>
        <end position="2140"/>
    </location>
</feature>
<feature type="disulfide bond" evidence="19 33">
    <location>
        <begin position="2163"/>
        <end position="2172"/>
    </location>
</feature>
<feature type="disulfide bond" evidence="3 19 33">
    <location>
        <begin position="2264"/>
        <end position="2281"/>
    </location>
</feature>
<feature type="disulfide bond" evidence="19 33">
    <location>
        <begin position="2442"/>
        <end position="2453"/>
    </location>
</feature>
<feature type="disulfide bond" evidence="19 33">
    <location>
        <begin position="2591"/>
        <end position="2715"/>
    </location>
</feature>
<feature type="splice variant" id="VSP_012655" description="In isoform 2." evidence="28">
    <original>CVTDCQRNEAGLQCDQNGQYRASQKDRGSGKAFCVDGEGRRLPWWETEAPLEDSQCLM</original>
    <variation>L</variation>
    <location>
        <begin position="1510"/>
        <end position="1567"/>
    </location>
</feature>
<feature type="sequence variant" id="VAR_010212" description="In dbSNP:rs2069546." evidence="5">
    <original>Q</original>
    <variation>H</variation>
    <location>
        <position position="135"/>
    </location>
</feature>
<feature type="sequence variant" id="VAR_063034" description="In TDH3." evidence="15">
    <original>C</original>
    <variation>Y</variation>
    <location>
        <position position="183"/>
    </location>
</feature>
<feature type="sequence variant" id="VAR_016190" description="In dbSNP:rs180222." evidence="11">
    <original>Q</original>
    <variation>E</variation>
    <location>
        <position position="515"/>
    </location>
</feature>
<feature type="sequence variant" id="VAR_016852" description="Requires 2 nucleotide substitutions; dbSNP:rs2069547." evidence="5 20 22">
    <original>S</original>
    <variation>D</variation>
    <location>
        <position position="604"/>
    </location>
</feature>
<feature type="sequence variant" id="VAR_016853" description="In dbSNP:rs2069548." evidence="5 20 22">
    <original>G</original>
    <variation>D</variation>
    <location>
        <position position="653"/>
    </location>
</feature>
<feature type="sequence variant" id="VAR_010213" description="In AITD3; benign; dbSNP:rs180223." evidence="5 10 21">
    <original>S</original>
    <variation>A</variation>
    <location>
        <position position="734"/>
    </location>
</feature>
<feature type="sequence variant" id="VAR_049077" description="In dbSNP:rs3739274.">
    <original>P</original>
    <variation>L</variation>
    <location>
        <position position="777"/>
    </location>
</feature>
<feature type="sequence variant" id="VAR_049078" description="In dbSNP:rs16904774.">
    <original>G</original>
    <variation>R</variation>
    <location>
        <position position="815"/>
    </location>
</feature>
<feature type="sequence variant" id="VAR_010214" description="In dbSNP:rs2076737." evidence="5">
    <original>Q</original>
    <variation>E</variation>
    <location>
        <position position="830"/>
    </location>
</feature>
<feature type="sequence variant" id="VAR_002365" description="In dbSNP:rs2229843." evidence="23">
    <original>Q</original>
    <variation>H</variation>
    <location>
        <position position="870"/>
    </location>
</feature>
<feature type="sequence variant" id="VAR_016854" evidence="5 20">
    <location>
        <position position="985"/>
    </location>
</feature>
<feature type="sequence variant" id="VAR_049079" description="In dbSNP:rs16893332.">
    <original>R</original>
    <variation>P</variation>
    <location>
        <position position="988"/>
    </location>
</feature>
<feature type="sequence variant" id="VAR_010215" description="In AITD3; uncertain significance; dbSNP:rs853326." evidence="5 10">
    <original>M</original>
    <variation>V</variation>
    <location>
        <position position="1028"/>
    </location>
</feature>
<feature type="sequence variant" id="VAR_016855" description="In dbSNP:rs143983705." evidence="5 20">
    <original>H</original>
    <variation>Y</variation>
    <location>
        <position position="1043"/>
    </location>
</feature>
<feature type="sequence variant" id="VAR_016856" description="In dbSNP:rs1016185504." evidence="5 20">
    <original>I</original>
    <variation>T</variation>
    <location>
        <position position="1059"/>
    </location>
</feature>
<feature type="sequence variant" id="VAR_049080" description="In dbSNP:rs11992497.">
    <original>L</original>
    <variation>M</variation>
    <location>
        <position position="1063"/>
    </location>
</feature>
<feature type="sequence variant" id="VAR_049081" description="In dbSNP:rs12549018.">
    <original>S</original>
    <variation>L</variation>
    <location>
        <position position="1222"/>
    </location>
</feature>
<feature type="sequence variant" id="VAR_010216" description="In TDH3; autosomal recessive; dbSNP:rs2076738." evidence="5">
    <original>C</original>
    <variation>R</variation>
    <location>
        <position position="1264"/>
    </location>
</feature>
<feature type="sequence variant" id="VAR_010217" description="In dbSNP:rs2069556." evidence="9 20 27">
    <original>D</original>
    <variation>G</variation>
    <location>
        <position position="1312"/>
    </location>
</feature>
<feature type="sequence variant" id="VAR_016857" description="In dbSNP:rs2069558." evidence="5 20">
    <original>W</original>
    <variation>R</variation>
    <location>
        <position position="1437"/>
    </location>
</feature>
<feature type="sequence variant" id="VAR_016858" evidence="5 20">
    <original>P</original>
    <variation>H</variation>
    <location>
        <position position="1463"/>
    </location>
</feature>
<feature type="sequence variant" id="VAR_049082" description="In dbSNP:rs16904791.">
    <original>T</original>
    <variation>K</variation>
    <location>
        <position position="1740"/>
    </location>
</feature>
<feature type="sequence variant" id="VAR_010218" description="In dbSNP:rs2069561." evidence="5">
    <original>D</original>
    <variation>N</variation>
    <location>
        <position position="1838"/>
    </location>
</feature>
<feature type="sequence variant" id="VAR_063035" description="In TDH3; dbSNP:rs121912649." evidence="12">
    <original>C</original>
    <variation>Y</variation>
    <location>
        <position position="1897"/>
    </location>
</feature>
<feature type="sequence variant" id="VAR_016859" description="In dbSNP:rs2069562." evidence="5 20">
    <original>A</original>
    <variation>T</variation>
    <location>
        <position position="1936"/>
    </location>
</feature>
<feature type="sequence variant" id="VAR_061173" description="In dbSNP:rs56230101.">
    <original>M</original>
    <variation>T</variation>
    <location>
        <position position="1974"/>
    </location>
</feature>
<feature type="sequence variant" id="VAR_010219" description="In TDH3; autosomal recessive; dbSNP:rs2076739." evidence="5">
    <original>C</original>
    <variation>S</variation>
    <location>
        <position position="1996"/>
    </location>
</feature>
<feature type="sequence variant" id="VAR_010220" description="In TDH3 and AITD3; benign; dbSNP:rs2076740." evidence="5 10">
    <original>R</original>
    <variation>W</variation>
    <location>
        <position position="1999"/>
    </location>
</feature>
<feature type="sequence variant" id="VAR_016860" evidence="5 20">
    <original>D</original>
    <variation>E</variation>
    <location>
        <position position="2091"/>
    </location>
</feature>
<feature type="sequence variant" id="VAR_016861" description="In dbSNP:rs2069564." evidence="5 7 20">
    <original>P</original>
    <variation>L</variation>
    <location>
        <position position="2149"/>
    </location>
</feature>
<feature type="sequence variant" id="VAR_016862" description="In dbSNP:rs2069565." evidence="5 7 20">
    <original>Q</original>
    <variation>R</variation>
    <location>
        <position position="2170"/>
    </location>
</feature>
<feature type="sequence variant" id="VAR_063036" description="In TDH3; reduces thyroglobulin synthesis and secretion; promotes thyroglobulin retention within the endoplasmic reticulum; dbSNP:rs370991693." evidence="15 16">
    <original>A</original>
    <variation>D</variation>
    <location>
        <position position="2234"/>
    </location>
</feature>
<feature type="sequence variant" id="VAR_016863" description="In dbSNP:rs2069566." evidence="5 20">
    <original>R</original>
    <variation>H</variation>
    <location>
        <position position="2242"/>
    </location>
</feature>
<feature type="sequence variant" id="VAR_078338" description="In TDH3; uncertain significance." evidence="17">
    <location>
        <begin position="2336"/>
        <end position="2768"/>
    </location>
</feature>
<feature type="sequence variant" id="VAR_063037" description="In TDH3; dbSNP:rs121912650." evidence="12">
    <original>R</original>
    <variation>Q</variation>
    <location>
        <position position="2336"/>
    </location>
</feature>
<feature type="sequence variant" id="VAR_063038" description="In TDH3; dbSNP:rs137854434." evidence="14">
    <original>G</original>
    <variation>R</variation>
    <location>
        <position position="2375"/>
    </location>
</feature>
<feature type="sequence variant" id="VAR_049083" description="In dbSNP:rs2272707.">
    <original>R</original>
    <variation>H</variation>
    <location>
        <position position="2455"/>
    </location>
</feature>
<feature type="sequence variant" id="VAR_049084" description="In dbSNP:rs2069568.">
    <original>L</original>
    <variation>P</variation>
    <location>
        <position position="2469"/>
    </location>
</feature>
<feature type="sequence variant" id="VAR_010221" description="In dbSNP:rs2069569." evidence="5">
    <original>W</original>
    <variation>R</variation>
    <location>
        <position position="2501"/>
    </location>
</feature>
<feature type="sequence variant" id="VAR_049085" description="In dbSNP:rs12114109.">
    <original>F</original>
    <variation>L</variation>
    <location>
        <position position="2526"/>
    </location>
</feature>
<feature type="sequence variant" id="VAR_010222" description="In dbSNP:rs1133076." evidence="5">
    <original>R</original>
    <variation>Q</variation>
    <location>
        <position position="2530"/>
    </location>
</feature>
<feature type="sequence variant" id="VAR_049086" description="In dbSNP:rs10091530.">
    <original>N</original>
    <variation>S</variation>
    <location>
        <position position="2616"/>
    </location>
</feature>
<feature type="mutagenesis site" description="Abolishes thyroxine (T4) production; when associated with F-1310, F-2573 and F-2766." evidence="19">
    <original>Y</original>
    <variation>F</variation>
    <location>
        <position position="24"/>
    </location>
</feature>
<feature type="mutagenesis site" description="Severe loss of thyroxine (T4) production; when associated with F-149 or F-234, and F-2540 and F-2766. Abolishes thyroxine (T4) production; when associated with F-149, F-234, F-2540 and F-2766." evidence="19">
    <original>Y</original>
    <variation>F</variation>
    <location>
        <position position="108"/>
    </location>
</feature>
<feature type="mutagenesis site" description="Severe loss of thyroxine (T4) production; when associated with F-108, F-2540 and F-2766. Abolishes thyroxine (T4) production; when associated with F-108, F-234, F-2540 and F-2766." evidence="19">
    <original>Y</original>
    <variation>F</variation>
    <location>
        <position position="149"/>
    </location>
</feature>
<feature type="mutagenesis site" description="Severe loss of thyroxine (T4) production; when associated with F-108, F-2540 and F-2766. Abolishes thyroxine (T4) production; when associated with F-108, F-149, F-2540 and F-2766." evidence="19">
    <original>Y</original>
    <variation>F</variation>
    <location>
        <position position="234"/>
    </location>
</feature>
<feature type="mutagenesis site" description="Abolishes thyroxine (T4) production." evidence="19">
    <original>D</original>
    <variation>S</variation>
    <location>
        <position position="1309"/>
    </location>
</feature>
<feature type="mutagenesis site" description="Abolishes thyroxine (T4) production; when associated with F-24, F-2573 and F-2766." evidence="19">
    <original>Y</original>
    <variation>F</variation>
    <location>
        <position position="1310"/>
    </location>
</feature>
<feature type="mutagenesis site" description="Severe loss of thyroxine (T4) production; when associated with F-149 or F-234, and F-108 and F-2766. Abolishes thyroxine (T4) production; when associated with F-108, F-149, F-234 and F-2766." evidence="19">
    <original>Y</original>
    <variation>F</variation>
    <location>
        <position position="2540"/>
    </location>
</feature>
<feature type="mutagenesis site" description="Abolishes thyroxine (T4) production; when associated with F-24, F-1310 and F-2766." evidence="19">
    <original>Y</original>
    <variation>F</variation>
    <location>
        <position position="2573"/>
    </location>
</feature>
<feature type="mutagenesis site" description="Abolishes thyroxine (T4) production; when associated with F-24, F-1310 and F-2573." evidence="19">
    <original>Y</original>
    <variation>F</variation>
    <location>
        <position position="2766"/>
    </location>
</feature>
<feature type="mutagenesis site" description="Severe loss of thyroxine (T4) production; when associated with F-149 or F-234, and F-108 and F-2540. Abolishes thyroxine (T4) production; when associated with F-108, F-149, F-234 and F-2540." evidence="19">
    <original>Y</original>
    <variation>F</variation>
    <location>
        <position position="2766"/>
    </location>
</feature>
<feature type="sequence conflict" description="In Ref. 6; CAA26527." evidence="29" ref="6">
    <original>EYQ</original>
    <variation>GKF</variation>
    <location>
        <begin position="23"/>
        <end position="25"/>
    </location>
</feature>
<feature type="sequence conflict" description="In Ref. 13; AA sequence." evidence="29" ref="13">
    <location>
        <position position="848"/>
    </location>
</feature>
<feature type="sequence conflict" description="In Ref. 5; CAA29456." evidence="29" ref="5">
    <original>EQ</original>
    <variation>DR</variation>
    <location>
        <begin position="984"/>
        <end position="985"/>
    </location>
</feature>
<feature type="sequence conflict" description="In Ref. 13; AA sequence." evidence="29" ref="13">
    <location>
        <begin position="1359"/>
        <end position="1360"/>
    </location>
</feature>
<feature type="sequence conflict" description="In Ref. 13; AA sequence." evidence="29" ref="13">
    <original>L</original>
    <variation>A</variation>
    <location>
        <position position="1717"/>
    </location>
</feature>
<feature type="sequence conflict" description="In Ref. 13; AA sequence." evidence="29" ref="13">
    <original>T</original>
    <variation>S</variation>
    <location>
        <position position="1776"/>
    </location>
</feature>
<feature type="sequence conflict" description="In Ref. 13; AA sequence." evidence="29" ref="13">
    <original>G</original>
    <variation>H</variation>
    <location>
        <position position="2019"/>
    </location>
</feature>
<feature type="sequence conflict" description="In Ref. 13; AA sequence." evidence="29" ref="13">
    <original>F</original>
    <variation>P</variation>
    <location>
        <position position="2287"/>
    </location>
</feature>
<feature type="helix" evidence="34">
    <location>
        <begin position="33"/>
        <end position="43"/>
    </location>
</feature>
<feature type="turn" evidence="34">
    <location>
        <begin position="54"/>
        <end position="56"/>
    </location>
</feature>
<feature type="strand" evidence="34">
    <location>
        <begin position="60"/>
        <end position="62"/>
    </location>
</feature>
<feature type="strand" evidence="34">
    <location>
        <begin position="69"/>
        <end position="72"/>
    </location>
</feature>
<feature type="strand" evidence="34">
    <location>
        <begin position="85"/>
        <end position="87"/>
    </location>
</feature>
<feature type="helix" evidence="34">
    <location>
        <begin position="95"/>
        <end position="104"/>
    </location>
</feature>
<feature type="strand" evidence="34">
    <location>
        <begin position="122"/>
        <end position="126"/>
    </location>
</feature>
<feature type="strand" evidence="34">
    <location>
        <begin position="137"/>
        <end position="139"/>
    </location>
</feature>
<feature type="strand" evidence="34">
    <location>
        <begin position="143"/>
        <end position="145"/>
    </location>
</feature>
<feature type="helix" evidence="34">
    <location>
        <begin position="149"/>
        <end position="151"/>
    </location>
</feature>
<feature type="strand" evidence="34">
    <location>
        <begin position="153"/>
        <end position="155"/>
    </location>
</feature>
<feature type="helix" evidence="34">
    <location>
        <begin position="163"/>
        <end position="170"/>
    </location>
</feature>
<feature type="turn" evidence="34">
    <location>
        <begin position="171"/>
        <end position="174"/>
    </location>
</feature>
<feature type="strand" evidence="34">
    <location>
        <begin position="185"/>
        <end position="187"/>
    </location>
</feature>
<feature type="strand" evidence="34">
    <location>
        <begin position="191"/>
        <end position="194"/>
    </location>
</feature>
<feature type="helix" evidence="34">
    <location>
        <begin position="209"/>
        <end position="212"/>
    </location>
</feature>
<feature type="turn" evidence="34">
    <location>
        <begin position="213"/>
        <end position="215"/>
    </location>
</feature>
<feature type="helix" evidence="34">
    <location>
        <begin position="221"/>
        <end position="227"/>
    </location>
</feature>
<feature type="strand" evidence="34">
    <location>
        <begin position="233"/>
        <end position="238"/>
    </location>
</feature>
<feature type="strand" evidence="34">
    <location>
        <begin position="251"/>
        <end position="253"/>
    </location>
</feature>
<feature type="strand" evidence="34">
    <location>
        <begin position="255"/>
        <end position="257"/>
    </location>
</feature>
<feature type="helix" evidence="34">
    <location>
        <begin position="271"/>
        <end position="273"/>
    </location>
</feature>
<feature type="helix" evidence="34">
    <location>
        <begin position="275"/>
        <end position="290"/>
    </location>
</feature>
<feature type="strand" evidence="34">
    <location>
        <begin position="294"/>
        <end position="296"/>
    </location>
</feature>
<feature type="helix" evidence="34">
    <location>
        <begin position="300"/>
        <end position="311"/>
    </location>
</feature>
<feature type="strand" evidence="34">
    <location>
        <begin position="321"/>
        <end position="325"/>
    </location>
</feature>
<feature type="strand" evidence="34">
    <location>
        <begin position="327"/>
        <end position="330"/>
    </location>
</feature>
<feature type="strand" evidence="34">
    <location>
        <begin position="332"/>
        <end position="334"/>
    </location>
</feature>
<feature type="strand" evidence="34">
    <location>
        <begin position="336"/>
        <end position="339"/>
    </location>
</feature>
<feature type="helix" evidence="34">
    <location>
        <begin position="347"/>
        <end position="349"/>
    </location>
</feature>
<feature type="helix" evidence="34">
    <location>
        <begin position="365"/>
        <end position="375"/>
    </location>
</feature>
<feature type="turn" evidence="34">
    <location>
        <begin position="410"/>
        <end position="412"/>
    </location>
</feature>
<feature type="helix" evidence="34">
    <location>
        <begin position="413"/>
        <end position="417"/>
    </location>
</feature>
<feature type="turn" evidence="34">
    <location>
        <begin position="418"/>
        <end position="420"/>
    </location>
</feature>
<feature type="helix" evidence="34">
    <location>
        <begin position="422"/>
        <end position="426"/>
    </location>
</feature>
<feature type="turn" evidence="34">
    <location>
        <begin position="427"/>
        <end position="429"/>
    </location>
</feature>
<feature type="helix" evidence="34">
    <location>
        <begin position="436"/>
        <end position="447"/>
    </location>
</feature>
<feature type="helix" evidence="34">
    <location>
        <begin position="451"/>
        <end position="460"/>
    </location>
</feature>
<feature type="helix" evidence="34">
    <location>
        <begin position="467"/>
        <end position="471"/>
    </location>
</feature>
<feature type="helix" evidence="34">
    <location>
        <begin position="476"/>
        <end position="481"/>
    </location>
</feature>
<feature type="helix" evidence="34">
    <location>
        <begin position="558"/>
        <end position="572"/>
    </location>
</feature>
<feature type="helix" evidence="34">
    <location>
        <begin position="575"/>
        <end position="585"/>
    </location>
</feature>
<feature type="turn" evidence="34">
    <location>
        <begin position="589"/>
        <end position="591"/>
    </location>
</feature>
<feature type="helix" evidence="34">
    <location>
        <begin position="595"/>
        <end position="604"/>
    </location>
</feature>
<feature type="helix" evidence="34">
    <location>
        <begin position="605"/>
        <end position="607"/>
    </location>
</feature>
<feature type="strand" evidence="34">
    <location>
        <begin position="628"/>
        <end position="632"/>
    </location>
</feature>
<feature type="strand" evidence="34">
    <location>
        <begin position="635"/>
        <end position="639"/>
    </location>
</feature>
<feature type="strand" evidence="34">
    <location>
        <begin position="641"/>
        <end position="643"/>
    </location>
</feature>
<feature type="strand" evidence="34">
    <location>
        <begin position="651"/>
        <end position="654"/>
    </location>
</feature>
<feature type="helix" evidence="34">
    <location>
        <begin position="661"/>
        <end position="673"/>
    </location>
</feature>
<feature type="strand" evidence="34">
    <location>
        <begin position="689"/>
        <end position="691"/>
    </location>
</feature>
<feature type="strand" evidence="34">
    <location>
        <begin position="700"/>
        <end position="704"/>
    </location>
</feature>
<feature type="helix" evidence="34">
    <location>
        <begin position="729"/>
        <end position="745"/>
    </location>
</feature>
<feature type="turn" evidence="34">
    <location>
        <begin position="754"/>
        <end position="756"/>
    </location>
</feature>
<feature type="strand" evidence="34">
    <location>
        <begin position="764"/>
        <end position="768"/>
    </location>
</feature>
<feature type="strand" evidence="34">
    <location>
        <begin position="771"/>
        <end position="773"/>
    </location>
</feature>
<feature type="helix" evidence="34">
    <location>
        <begin position="779"/>
        <end position="791"/>
    </location>
</feature>
<feature type="strand" evidence="34">
    <location>
        <begin position="792"/>
        <end position="794"/>
    </location>
</feature>
<feature type="helix" evidence="34">
    <location>
        <begin position="797"/>
        <end position="805"/>
    </location>
</feature>
<feature type="strand" evidence="34">
    <location>
        <begin position="867"/>
        <end position="869"/>
    </location>
</feature>
<feature type="strand" evidence="34">
    <location>
        <begin position="877"/>
        <end position="879"/>
    </location>
</feature>
<feature type="strand" evidence="34">
    <location>
        <begin position="894"/>
        <end position="896"/>
    </location>
</feature>
<feature type="strand" evidence="34">
    <location>
        <begin position="899"/>
        <end position="901"/>
    </location>
</feature>
<feature type="helix" evidence="34">
    <location>
        <begin position="924"/>
        <end position="948"/>
    </location>
</feature>
<feature type="helix" evidence="34">
    <location>
        <begin position="955"/>
        <end position="961"/>
    </location>
</feature>
<feature type="helix" evidence="34">
    <location>
        <begin position="968"/>
        <end position="970"/>
    </location>
</feature>
<feature type="helix" evidence="34">
    <location>
        <begin position="979"/>
        <end position="985"/>
    </location>
</feature>
<feature type="helix" evidence="34">
    <location>
        <begin position="991"/>
        <end position="1008"/>
    </location>
</feature>
<feature type="strand" evidence="34">
    <location>
        <begin position="1033"/>
        <end position="1035"/>
    </location>
</feature>
<feature type="strand" evidence="34">
    <location>
        <begin position="1039"/>
        <end position="1042"/>
    </location>
</feature>
<feature type="turn" evidence="34">
    <location>
        <begin position="1044"/>
        <end position="1046"/>
    </location>
</feature>
<feature type="strand" evidence="34">
    <location>
        <begin position="1048"/>
        <end position="1051"/>
    </location>
</feature>
<feature type="strand" evidence="34">
    <location>
        <begin position="1054"/>
        <end position="1056"/>
    </location>
</feature>
<feature type="helix" evidence="34">
    <location>
        <begin position="1076"/>
        <end position="1086"/>
    </location>
</feature>
<feature type="strand" evidence="34">
    <location>
        <begin position="1090"/>
        <end position="1093"/>
    </location>
</feature>
<feature type="strand" evidence="34">
    <location>
        <begin position="1095"/>
        <end position="1097"/>
    </location>
</feature>
<feature type="strand" evidence="34">
    <location>
        <begin position="1102"/>
        <end position="1104"/>
    </location>
</feature>
<feature type="strand" evidence="34">
    <location>
        <begin position="1110"/>
        <end position="1114"/>
    </location>
</feature>
<feature type="strand" evidence="34">
    <location>
        <begin position="1116"/>
        <end position="1119"/>
    </location>
</feature>
<feature type="strand" evidence="34">
    <location>
        <begin position="1124"/>
        <end position="1127"/>
    </location>
</feature>
<feature type="strand" evidence="34">
    <location>
        <begin position="1129"/>
        <end position="1131"/>
    </location>
</feature>
<feature type="strand" evidence="34">
    <location>
        <begin position="1133"/>
        <end position="1135"/>
    </location>
</feature>
<feature type="strand" evidence="34">
    <location>
        <begin position="1137"/>
        <end position="1139"/>
    </location>
</feature>
<feature type="strand" evidence="34">
    <location>
        <begin position="1142"/>
        <end position="1144"/>
    </location>
</feature>
<feature type="helix" evidence="34">
    <location>
        <begin position="1148"/>
        <end position="1157"/>
    </location>
</feature>
<feature type="strand" evidence="34">
    <location>
        <begin position="1163"/>
        <end position="1165"/>
    </location>
</feature>
<feature type="turn" evidence="34">
    <location>
        <begin position="1171"/>
        <end position="1173"/>
    </location>
</feature>
<feature type="strand" evidence="34">
    <location>
        <begin position="1203"/>
        <end position="1207"/>
    </location>
</feature>
<feature type="strand" evidence="34">
    <location>
        <begin position="1218"/>
        <end position="1220"/>
    </location>
</feature>
<feature type="strand" evidence="34">
    <location>
        <begin position="1227"/>
        <end position="1230"/>
    </location>
</feature>
<feature type="strand" evidence="34">
    <location>
        <begin position="1246"/>
        <end position="1249"/>
    </location>
</feature>
<feature type="strand" evidence="34">
    <location>
        <begin position="1254"/>
        <end position="1258"/>
    </location>
</feature>
<feature type="strand" evidence="34">
    <location>
        <begin position="1289"/>
        <end position="1295"/>
    </location>
</feature>
<feature type="helix" evidence="34">
    <location>
        <begin position="1301"/>
        <end position="1303"/>
    </location>
</feature>
<feature type="helix" evidence="34">
    <location>
        <begin position="1315"/>
        <end position="1327"/>
    </location>
</feature>
<feature type="strand" evidence="34">
    <location>
        <begin position="1331"/>
        <end position="1337"/>
    </location>
</feature>
<feature type="strand" evidence="34">
    <location>
        <begin position="1340"/>
        <end position="1345"/>
    </location>
</feature>
<feature type="strand" evidence="34">
    <location>
        <begin position="1365"/>
        <end position="1371"/>
    </location>
</feature>
<feature type="turn" evidence="34">
    <location>
        <begin position="1372"/>
        <end position="1374"/>
    </location>
</feature>
<feature type="strand" evidence="34">
    <location>
        <begin position="1377"/>
        <end position="1380"/>
    </location>
</feature>
<feature type="helix" evidence="34">
    <location>
        <begin position="1383"/>
        <end position="1391"/>
    </location>
</feature>
<feature type="turn" evidence="34">
    <location>
        <begin position="1393"/>
        <end position="1395"/>
    </location>
</feature>
<feature type="helix" evidence="34">
    <location>
        <begin position="1396"/>
        <end position="1404"/>
    </location>
</feature>
<feature type="strand" evidence="34">
    <location>
        <begin position="1437"/>
        <end position="1439"/>
    </location>
</feature>
<feature type="strand" evidence="34">
    <location>
        <begin position="1442"/>
        <end position="1446"/>
    </location>
</feature>
<feature type="helix" evidence="34">
    <location>
        <begin position="1454"/>
        <end position="1456"/>
    </location>
</feature>
<feature type="strand" evidence="34">
    <location>
        <begin position="1459"/>
        <end position="1461"/>
    </location>
</feature>
<feature type="strand" evidence="34">
    <location>
        <begin position="1466"/>
        <end position="1475"/>
    </location>
</feature>
<feature type="strand" evidence="34">
    <location>
        <begin position="1484"/>
        <end position="1486"/>
    </location>
</feature>
<feature type="strand" evidence="34">
    <location>
        <begin position="1494"/>
        <end position="1496"/>
    </location>
</feature>
<feature type="strand" evidence="34">
    <location>
        <begin position="1500"/>
        <end position="1502"/>
    </location>
</feature>
<feature type="helix" evidence="34">
    <location>
        <begin position="1507"/>
        <end position="1509"/>
    </location>
</feature>
<feature type="helix" evidence="34">
    <location>
        <begin position="1513"/>
        <end position="1516"/>
    </location>
</feature>
<feature type="strand" evidence="34">
    <location>
        <begin position="1527"/>
        <end position="1529"/>
    </location>
</feature>
<feature type="strand" evidence="34">
    <location>
        <begin position="1531"/>
        <end position="1539"/>
    </location>
</feature>
<feature type="strand" evidence="34">
    <location>
        <begin position="1541"/>
        <end position="1543"/>
    </location>
</feature>
<feature type="strand" evidence="34">
    <location>
        <begin position="1546"/>
        <end position="1549"/>
    </location>
</feature>
<feature type="helix" evidence="34">
    <location>
        <begin position="1553"/>
        <end position="1556"/>
    </location>
</feature>
<feature type="helix" evidence="34">
    <location>
        <begin position="1576"/>
        <end position="1578"/>
    </location>
</feature>
<feature type="strand" evidence="34">
    <location>
        <begin position="1596"/>
        <end position="1598"/>
    </location>
</feature>
<feature type="helix" evidence="34">
    <location>
        <begin position="1599"/>
        <end position="1606"/>
    </location>
</feature>
<feature type="strand" evidence="34">
    <location>
        <begin position="1621"/>
        <end position="1624"/>
    </location>
</feature>
<feature type="strand" evidence="34">
    <location>
        <begin position="1683"/>
        <end position="1686"/>
    </location>
</feature>
<feature type="strand" evidence="34">
    <location>
        <begin position="1691"/>
        <end position="1693"/>
    </location>
</feature>
<feature type="strand" evidence="34">
    <location>
        <begin position="1697"/>
        <end position="1700"/>
    </location>
</feature>
<feature type="strand" evidence="34">
    <location>
        <begin position="1708"/>
        <end position="1710"/>
    </location>
</feature>
<feature type="turn" evidence="34">
    <location>
        <begin position="1712"/>
        <end position="1714"/>
    </location>
</feature>
<feature type="helix" evidence="34">
    <location>
        <begin position="1719"/>
        <end position="1730"/>
    </location>
</feature>
<feature type="strand" evidence="34">
    <location>
        <begin position="1731"/>
        <end position="1733"/>
    </location>
</feature>
<feature type="strand" evidence="34">
    <location>
        <begin position="1736"/>
        <end position="1741"/>
    </location>
</feature>
<feature type="strand" evidence="34">
    <location>
        <begin position="1747"/>
        <end position="1752"/>
    </location>
</feature>
<feature type="strand" evidence="34">
    <location>
        <begin position="1756"/>
        <end position="1764"/>
    </location>
</feature>
<feature type="strand" evidence="34">
    <location>
        <begin position="1815"/>
        <end position="1821"/>
    </location>
</feature>
<feature type="turn" evidence="34">
    <location>
        <begin position="1826"/>
        <end position="1828"/>
    </location>
</feature>
<feature type="strand" evidence="34">
    <location>
        <begin position="1831"/>
        <end position="1834"/>
    </location>
</feature>
<feature type="turn" evidence="34">
    <location>
        <begin position="1848"/>
        <end position="1850"/>
    </location>
</feature>
<feature type="strand" evidence="34">
    <location>
        <begin position="1855"/>
        <end position="1858"/>
    </location>
</feature>
<feature type="turn" evidence="34">
    <location>
        <begin position="1868"/>
        <end position="1870"/>
    </location>
</feature>
<feature type="strand" evidence="34">
    <location>
        <begin position="1876"/>
        <end position="1880"/>
    </location>
</feature>
<feature type="strand" evidence="34">
    <location>
        <begin position="1882"/>
        <end position="1884"/>
    </location>
</feature>
<feature type="helix" evidence="34">
    <location>
        <begin position="1889"/>
        <end position="1899"/>
    </location>
</feature>
<feature type="strand" evidence="34">
    <location>
        <begin position="1905"/>
        <end position="1910"/>
    </location>
</feature>
<feature type="strand" evidence="34">
    <location>
        <begin position="1912"/>
        <end position="1915"/>
    </location>
</feature>
<feature type="strand" evidence="34">
    <location>
        <begin position="1917"/>
        <end position="1922"/>
    </location>
</feature>
<feature type="strand" evidence="34">
    <location>
        <begin position="1940"/>
        <end position="1945"/>
    </location>
</feature>
<feature type="strand" evidence="34">
    <location>
        <begin position="1948"/>
        <end position="1953"/>
    </location>
</feature>
<feature type="strand" evidence="34">
    <location>
        <begin position="1972"/>
        <end position="1975"/>
    </location>
</feature>
<feature type="strand" evidence="34">
    <location>
        <begin position="1977"/>
        <end position="1983"/>
    </location>
</feature>
<feature type="helix" evidence="34">
    <location>
        <begin position="1989"/>
        <end position="2002"/>
    </location>
</feature>
<feature type="strand" evidence="34">
    <location>
        <begin position="2008"/>
        <end position="2014"/>
    </location>
</feature>
<feature type="strand" evidence="34">
    <location>
        <begin position="2017"/>
        <end position="2019"/>
    </location>
</feature>
<feature type="strand" evidence="34">
    <location>
        <begin position="2022"/>
        <end position="2029"/>
    </location>
</feature>
<feature type="strand" evidence="34">
    <location>
        <begin position="2032"/>
        <end position="2034"/>
    </location>
</feature>
<feature type="strand" evidence="34">
    <location>
        <begin position="2037"/>
        <end position="2039"/>
    </location>
</feature>
<feature type="turn" evidence="34">
    <location>
        <begin position="2051"/>
        <end position="2053"/>
    </location>
</feature>
<feature type="strand" evidence="34">
    <location>
        <begin position="2093"/>
        <end position="2096"/>
    </location>
</feature>
<feature type="helix" evidence="34">
    <location>
        <begin position="2098"/>
        <end position="2100"/>
    </location>
</feature>
<feature type="strand" evidence="34">
    <location>
        <begin position="2101"/>
        <end position="2103"/>
    </location>
</feature>
<feature type="strand" evidence="34">
    <location>
        <begin position="2110"/>
        <end position="2116"/>
    </location>
</feature>
<feature type="helix" evidence="34">
    <location>
        <begin position="2123"/>
        <end position="2136"/>
    </location>
</feature>
<feature type="strand" evidence="34">
    <location>
        <begin position="2142"/>
        <end position="2147"/>
    </location>
</feature>
<feature type="strand" evidence="34">
    <location>
        <begin position="2149"/>
        <end position="2157"/>
    </location>
</feature>
<feature type="strand" evidence="34">
    <location>
        <begin position="2161"/>
        <end position="2164"/>
    </location>
</feature>
<feature type="strand" evidence="34">
    <location>
        <begin position="2171"/>
        <end position="2178"/>
    </location>
</feature>
<feature type="strand" evidence="34">
    <location>
        <begin position="2181"/>
        <end position="2185"/>
    </location>
</feature>
<feature type="strand" evidence="34">
    <location>
        <begin position="2193"/>
        <end position="2195"/>
    </location>
</feature>
<feature type="strand" evidence="34">
    <location>
        <begin position="2198"/>
        <end position="2203"/>
    </location>
</feature>
<feature type="turn" evidence="34">
    <location>
        <begin position="2204"/>
        <end position="2206"/>
    </location>
</feature>
<feature type="strand" evidence="34">
    <location>
        <begin position="2207"/>
        <end position="2210"/>
    </location>
</feature>
<feature type="strand" evidence="34">
    <location>
        <begin position="2212"/>
        <end position="2218"/>
    </location>
</feature>
<feature type="strand" evidence="34">
    <location>
        <begin position="2221"/>
        <end position="2227"/>
    </location>
</feature>
<feature type="strand" evidence="34">
    <location>
        <begin position="2238"/>
        <end position="2241"/>
    </location>
</feature>
<feature type="strand" evidence="34">
    <location>
        <begin position="2253"/>
        <end position="2256"/>
    </location>
</feature>
<feature type="strand" evidence="34">
    <location>
        <begin position="2273"/>
        <end position="2277"/>
    </location>
</feature>
<feature type="strand" evidence="34">
    <location>
        <begin position="2286"/>
        <end position="2291"/>
    </location>
</feature>
<feature type="strand" evidence="34">
    <location>
        <begin position="2296"/>
        <end position="2302"/>
    </location>
</feature>
<feature type="strand" evidence="34">
    <location>
        <begin position="2312"/>
        <end position="2314"/>
    </location>
</feature>
<feature type="helix" evidence="34">
    <location>
        <begin position="2320"/>
        <end position="2326"/>
    </location>
</feature>
<feature type="strand" evidence="34">
    <location>
        <begin position="2328"/>
        <end position="2333"/>
    </location>
</feature>
<feature type="turn" evidence="34">
    <location>
        <begin position="2338"/>
        <end position="2341"/>
    </location>
</feature>
<feature type="strand" evidence="34">
    <location>
        <begin position="2346"/>
        <end position="2350"/>
    </location>
</feature>
<feature type="helix" evidence="34">
    <location>
        <begin position="2354"/>
        <end position="2368"/>
    </location>
</feature>
<feature type="helix" evidence="34">
    <location>
        <begin position="2370"/>
        <end position="2372"/>
    </location>
</feature>
<feature type="strand" evidence="34">
    <location>
        <begin position="2375"/>
        <end position="2385"/>
    </location>
</feature>
<feature type="turn" evidence="34">
    <location>
        <begin position="2386"/>
        <end position="2393"/>
    </location>
</feature>
<feature type="helix" evidence="34">
    <location>
        <begin position="2394"/>
        <end position="2397"/>
    </location>
</feature>
<feature type="strand" evidence="34">
    <location>
        <begin position="2408"/>
        <end position="2414"/>
    </location>
</feature>
<feature type="helix" evidence="34">
    <location>
        <begin position="2426"/>
        <end position="2440"/>
    </location>
</feature>
<feature type="helix" evidence="34">
    <location>
        <begin position="2447"/>
        <end position="2454"/>
    </location>
</feature>
<feature type="helix" evidence="34">
    <location>
        <begin position="2459"/>
        <end position="2471"/>
    </location>
</feature>
<feature type="helix" evidence="34">
    <location>
        <begin position="2475"/>
        <end position="2477"/>
    </location>
</feature>
<feature type="turn" evidence="34">
    <location>
        <begin position="2484"/>
        <end position="2487"/>
    </location>
</feature>
<feature type="helix" evidence="34">
    <location>
        <begin position="2492"/>
        <end position="2495"/>
    </location>
</feature>
<feature type="helix" evidence="34">
    <location>
        <begin position="2496"/>
        <end position="2498"/>
    </location>
</feature>
<feature type="strand" evidence="34">
    <location>
        <begin position="2506"/>
        <end position="2509"/>
    </location>
</feature>
<feature type="helix" evidence="34">
    <location>
        <begin position="2518"/>
        <end position="2520"/>
    </location>
</feature>
<feature type="helix" evidence="34">
    <location>
        <begin position="2521"/>
        <end position="2530"/>
    </location>
</feature>
<feature type="helix" evidence="34">
    <location>
        <begin position="2537"/>
        <end position="2547"/>
    </location>
</feature>
<feature type="turn" evidence="34">
    <location>
        <begin position="2549"/>
        <end position="2552"/>
    </location>
</feature>
<feature type="helix" evidence="34">
    <location>
        <begin position="2554"/>
        <end position="2563"/>
    </location>
</feature>
<feature type="helix" evidence="34">
    <location>
        <begin position="2573"/>
        <end position="2588"/>
    </location>
</feature>
<feature type="helix" evidence="34">
    <location>
        <begin position="2590"/>
        <end position="2602"/>
    </location>
</feature>
<feature type="strand" evidence="34">
    <location>
        <begin position="2608"/>
        <end position="2613"/>
    </location>
</feature>
<feature type="strand" evidence="34">
    <location>
        <begin position="2622"/>
        <end position="2624"/>
    </location>
</feature>
<feature type="helix" evidence="34">
    <location>
        <begin position="2626"/>
        <end position="2631"/>
    </location>
</feature>
<feature type="helix" evidence="34">
    <location>
        <begin position="2634"/>
        <end position="2636"/>
    </location>
</feature>
<feature type="strand" evidence="34">
    <location>
        <begin position="2641"/>
        <end position="2644"/>
    </location>
</feature>
<feature type="helix" evidence="34">
    <location>
        <begin position="2646"/>
        <end position="2664"/>
    </location>
</feature>
<feature type="turn" evidence="34">
    <location>
        <begin position="2673"/>
        <end position="2675"/>
    </location>
</feature>
<feature type="strand" evidence="34">
    <location>
        <begin position="2697"/>
        <end position="2699"/>
    </location>
</feature>
<feature type="strand" evidence="34">
    <location>
        <begin position="2701"/>
        <end position="2703"/>
    </location>
</feature>
<feature type="strand" evidence="34">
    <location>
        <begin position="2706"/>
        <end position="2708"/>
    </location>
</feature>
<feature type="helix" evidence="34">
    <location>
        <begin position="2712"/>
        <end position="2719"/>
    </location>
</feature>
<feature type="helix" evidence="34">
    <location>
        <begin position="2721"/>
        <end position="2726"/>
    </location>
</feature>
<keyword id="KW-0002">3D-structure</keyword>
<keyword id="KW-0025">Alternative splicing</keyword>
<keyword id="KW-0984">Congenital hypothyroidism</keyword>
<keyword id="KW-0903">Direct protein sequencing</keyword>
<keyword id="KW-0225">Disease variant</keyword>
<keyword id="KW-1015">Disulfide bond</keyword>
<keyword id="KW-0325">Glycoprotein</keyword>
<keyword id="KW-0372">Hormone</keyword>
<keyword id="KW-0405">Iodination</keyword>
<keyword id="KW-0654">Proteoglycan</keyword>
<keyword id="KW-1267">Proteomics identification</keyword>
<keyword id="KW-1185">Reference proteome</keyword>
<keyword id="KW-0677">Repeat</keyword>
<keyword id="KW-0964">Secreted</keyword>
<keyword id="KW-0732">Signal</keyword>
<keyword id="KW-0765">Sulfation</keyword>
<keyword id="KW-0795">Thyroid hormone</keyword>
<keyword id="KW-0893">Thyroid hormones biosynthesis</keyword>
<protein>
    <recommendedName>
        <fullName evidence="29">Thyroglobulin</fullName>
        <shortName>Tg</shortName>
    </recommendedName>
</protein>
<gene>
    <name evidence="32" type="primary">TG</name>
</gene>
<organism>
    <name type="scientific">Homo sapiens</name>
    <name type="common">Human</name>
    <dbReference type="NCBI Taxonomy" id="9606"/>
    <lineage>
        <taxon>Eukaryota</taxon>
        <taxon>Metazoa</taxon>
        <taxon>Chordata</taxon>
        <taxon>Craniata</taxon>
        <taxon>Vertebrata</taxon>
        <taxon>Euteleostomi</taxon>
        <taxon>Mammalia</taxon>
        <taxon>Eutheria</taxon>
        <taxon>Euarchontoglires</taxon>
        <taxon>Primates</taxon>
        <taxon>Haplorrhini</taxon>
        <taxon>Catarrhini</taxon>
        <taxon>Hominidae</taxon>
        <taxon>Homo</taxon>
    </lineage>
</organism>
<dbReference type="EMBL" id="X05615">
    <property type="protein sequence ID" value="CAA29104.1"/>
    <property type="molecule type" value="mRNA"/>
</dbReference>
<dbReference type="EMBL" id="U93033">
    <property type="protein sequence ID" value="AAC51924.1"/>
    <property type="molecule type" value="mRNA"/>
</dbReference>
<dbReference type="EMBL" id="AF230667">
    <property type="status" value="NOT_ANNOTATED_CDS"/>
    <property type="molecule type" value="Genomic_DNA"/>
</dbReference>
<dbReference type="EMBL" id="AF235100">
    <property type="status" value="NOT_ANNOTATED_CDS"/>
    <property type="molecule type" value="Genomic_DNA"/>
</dbReference>
<dbReference type="EMBL" id="AF230666">
    <property type="status" value="NOT_ANNOTATED_CDS"/>
    <property type="molecule type" value="Genomic_DNA"/>
</dbReference>
<dbReference type="EMBL" id="AF305872">
    <property type="status" value="NOT_ANNOTATED_CDS"/>
    <property type="molecule type" value="Genomic_DNA"/>
</dbReference>
<dbReference type="EMBL" id="X02154">
    <property type="protein sequence ID" value="CAA26089.1"/>
    <property type="molecule type" value="mRNA"/>
</dbReference>
<dbReference type="EMBL" id="X06059">
    <property type="protein sequence ID" value="CAA29454.1"/>
    <property type="molecule type" value="Genomic_DNA"/>
</dbReference>
<dbReference type="EMBL" id="X06060">
    <property type="protein sequence ID" value="CAA29454.1"/>
    <property type="status" value="JOINED"/>
    <property type="molecule type" value="Genomic_DNA"/>
</dbReference>
<dbReference type="EMBL" id="X06061">
    <property type="protein sequence ID" value="CAA29454.1"/>
    <property type="status" value="JOINED"/>
    <property type="molecule type" value="Genomic_DNA"/>
</dbReference>
<dbReference type="EMBL" id="X06062">
    <property type="protein sequence ID" value="CAA29454.1"/>
    <property type="status" value="JOINED"/>
    <property type="molecule type" value="Genomic_DNA"/>
</dbReference>
<dbReference type="EMBL" id="X06063">
    <property type="protein sequence ID" value="CAA29454.1"/>
    <property type="status" value="JOINED"/>
    <property type="molecule type" value="Genomic_DNA"/>
</dbReference>
<dbReference type="EMBL" id="X06064">
    <property type="protein sequence ID" value="CAA29454.1"/>
    <property type="status" value="JOINED"/>
    <property type="molecule type" value="Genomic_DNA"/>
</dbReference>
<dbReference type="EMBL" id="X06065">
    <property type="protein sequence ID" value="CAA29454.1"/>
    <property type="status" value="JOINED"/>
    <property type="molecule type" value="Genomic_DNA"/>
</dbReference>
<dbReference type="EMBL" id="X06066">
    <property type="protein sequence ID" value="CAA29454.1"/>
    <property type="status" value="JOINED"/>
    <property type="molecule type" value="Genomic_DNA"/>
</dbReference>
<dbReference type="EMBL" id="X06067">
    <property type="protein sequence ID" value="CAA29455.1"/>
    <property type="molecule type" value="Genomic_DNA"/>
</dbReference>
<dbReference type="EMBL" id="X06068">
    <property type="protein sequence ID" value="CAA29455.1"/>
    <property type="status" value="JOINED"/>
    <property type="molecule type" value="Genomic_DNA"/>
</dbReference>
<dbReference type="EMBL" id="X06069">
    <property type="protein sequence ID" value="CAA29456.1"/>
    <property type="molecule type" value="Genomic_DNA"/>
</dbReference>
<dbReference type="EMBL" id="X06070">
    <property type="protein sequence ID" value="CAA29456.1"/>
    <property type="status" value="JOINED"/>
    <property type="molecule type" value="Genomic_DNA"/>
</dbReference>
<dbReference type="EMBL" id="X02749">
    <property type="protein sequence ID" value="CAA26527.1"/>
    <property type="molecule type" value="Genomic_DNA"/>
</dbReference>
<dbReference type="EMBL" id="AH008122">
    <property type="protein sequence ID" value="AAD51647.1"/>
    <property type="molecule type" value="Genomic_DNA"/>
</dbReference>
<dbReference type="EMBL" id="AH007064">
    <property type="protein sequence ID" value="AAC95473.1"/>
    <property type="molecule type" value="Genomic_DNA"/>
</dbReference>
<dbReference type="EMBL" id="AF080484">
    <property type="protein sequence ID" value="AAD50912.2"/>
    <property type="molecule type" value="Genomic_DNA"/>
</dbReference>
<dbReference type="EMBL" id="AF169654">
    <property type="protein sequence ID" value="AAD50912.2"/>
    <property type="status" value="JOINED"/>
    <property type="molecule type" value="Genomic_DNA"/>
</dbReference>
<dbReference type="EMBL" id="AF169655">
    <property type="protein sequence ID" value="AAD50912.2"/>
    <property type="status" value="JOINED"/>
    <property type="molecule type" value="Genomic_DNA"/>
</dbReference>
<dbReference type="EMBL" id="AF169656">
    <property type="protein sequence ID" value="AAD50912.2"/>
    <property type="status" value="JOINED"/>
    <property type="molecule type" value="Genomic_DNA"/>
</dbReference>
<dbReference type="EMBL" id="AF169657">
    <property type="protein sequence ID" value="AAD50912.2"/>
    <property type="status" value="JOINED"/>
    <property type="molecule type" value="Genomic_DNA"/>
</dbReference>
<dbReference type="EMBL" id="AF169658">
    <property type="protein sequence ID" value="AAD50912.2"/>
    <property type="status" value="JOINED"/>
    <property type="molecule type" value="Genomic_DNA"/>
</dbReference>
<dbReference type="EMBL" id="AF169659">
    <property type="protein sequence ID" value="AAD50912.2"/>
    <property type="status" value="JOINED"/>
    <property type="molecule type" value="Genomic_DNA"/>
</dbReference>
<dbReference type="EMBL" id="AF169661">
    <property type="protein sequence ID" value="AAD50912.2"/>
    <property type="status" value="JOINED"/>
    <property type="molecule type" value="Genomic_DNA"/>
</dbReference>
<dbReference type="EMBL" id="AF169662">
    <property type="protein sequence ID" value="AAD50912.2"/>
    <property type="status" value="JOINED"/>
    <property type="molecule type" value="Genomic_DNA"/>
</dbReference>
<dbReference type="EMBL" id="AF169663">
    <property type="protein sequence ID" value="AAD50912.2"/>
    <property type="status" value="JOINED"/>
    <property type="molecule type" value="Genomic_DNA"/>
</dbReference>
<dbReference type="EMBL" id="AF169664">
    <property type="protein sequence ID" value="AAD50912.2"/>
    <property type="status" value="JOINED"/>
    <property type="molecule type" value="Genomic_DNA"/>
</dbReference>
<dbReference type="EMBL" id="AF080472">
    <property type="protein sequence ID" value="AAD50912.2"/>
    <property type="status" value="JOINED"/>
    <property type="molecule type" value="Genomic_DNA"/>
</dbReference>
<dbReference type="EMBL" id="AF080473">
    <property type="protein sequence ID" value="AAD50912.2"/>
    <property type="status" value="JOINED"/>
    <property type="molecule type" value="Genomic_DNA"/>
</dbReference>
<dbReference type="EMBL" id="AF080474">
    <property type="protein sequence ID" value="AAD50912.2"/>
    <property type="status" value="JOINED"/>
    <property type="molecule type" value="Genomic_DNA"/>
</dbReference>
<dbReference type="EMBL" id="AF080475">
    <property type="protein sequence ID" value="AAD50912.2"/>
    <property type="status" value="JOINED"/>
    <property type="molecule type" value="Genomic_DNA"/>
</dbReference>
<dbReference type="EMBL" id="AF080476">
    <property type="protein sequence ID" value="AAD50912.2"/>
    <property type="status" value="JOINED"/>
    <property type="molecule type" value="Genomic_DNA"/>
</dbReference>
<dbReference type="EMBL" id="AF080477">
    <property type="protein sequence ID" value="AAD50912.2"/>
    <property type="status" value="JOINED"/>
    <property type="molecule type" value="Genomic_DNA"/>
</dbReference>
<dbReference type="EMBL" id="AF080478">
    <property type="protein sequence ID" value="AAD50912.2"/>
    <property type="status" value="JOINED"/>
    <property type="molecule type" value="Genomic_DNA"/>
</dbReference>
<dbReference type="EMBL" id="AF080479">
    <property type="protein sequence ID" value="AAD50912.2"/>
    <property type="status" value="JOINED"/>
    <property type="molecule type" value="Genomic_DNA"/>
</dbReference>
<dbReference type="EMBL" id="AF080480">
    <property type="protein sequence ID" value="AAD50912.2"/>
    <property type="status" value="JOINED"/>
    <property type="molecule type" value="Genomic_DNA"/>
</dbReference>
<dbReference type="EMBL" id="AF080481">
    <property type="protein sequence ID" value="AAD50912.2"/>
    <property type="status" value="JOINED"/>
    <property type="molecule type" value="Genomic_DNA"/>
</dbReference>
<dbReference type="EMBL" id="AF080482">
    <property type="protein sequence ID" value="AAD50912.2"/>
    <property type="status" value="JOINED"/>
    <property type="molecule type" value="Genomic_DNA"/>
</dbReference>
<dbReference type="EMBL" id="AF080483">
    <property type="protein sequence ID" value="AAD50912.2"/>
    <property type="status" value="JOINED"/>
    <property type="molecule type" value="Genomic_DNA"/>
</dbReference>
<dbReference type="EMBL" id="S40807">
    <property type="protein sequence ID" value="AAB22685.1"/>
    <property type="molecule type" value="mRNA"/>
</dbReference>
<dbReference type="CCDS" id="CCDS34944.1">
    <molecule id="P01266-1"/>
</dbReference>
<dbReference type="PIR" id="A59110">
    <property type="entry name" value="UIHU"/>
</dbReference>
<dbReference type="RefSeq" id="NP_003226.4">
    <molecule id="P01266-1"/>
    <property type="nucleotide sequence ID" value="NM_003235.4"/>
</dbReference>
<dbReference type="RefSeq" id="XP_016869284.1">
    <molecule id="P01266-2"/>
    <property type="nucleotide sequence ID" value="XM_017013795.2"/>
</dbReference>
<dbReference type="PDB" id="6SCJ">
    <property type="method" value="EM"/>
    <property type="resolution" value="3.60 A"/>
    <property type="chains" value="A/B=1-2768"/>
</dbReference>
<dbReference type="PDB" id="7B75">
    <property type="method" value="EM"/>
    <property type="resolution" value="3.20 A"/>
    <property type="chains" value="A/B=1-2768"/>
</dbReference>
<dbReference type="PDBsum" id="6SCJ"/>
<dbReference type="PDBsum" id="7B75"/>
<dbReference type="EMDB" id="EMD-10141"/>
<dbReference type="EMDB" id="EMD-12073"/>
<dbReference type="SASBDB" id="P01266"/>
<dbReference type="SMR" id="P01266"/>
<dbReference type="BioGRID" id="112896">
    <property type="interactions" value="7"/>
</dbReference>
<dbReference type="ELM" id="P01266"/>
<dbReference type="FunCoup" id="P01266">
    <property type="interactions" value="343"/>
</dbReference>
<dbReference type="IntAct" id="P01266">
    <property type="interactions" value="4"/>
</dbReference>
<dbReference type="STRING" id="9606.ENSP00000220616"/>
<dbReference type="DrugBank" id="DB05382">
    <property type="generic name" value="Iodine"/>
</dbReference>
<dbReference type="ESTHER" id="human-TG">
    <property type="family name" value="Thyroglobulin"/>
</dbReference>
<dbReference type="MEROPS" id="I31.950"/>
<dbReference type="MEROPS" id="S09.978"/>
<dbReference type="CarbonylDB" id="P01266"/>
<dbReference type="GlyConnect" id="600">
    <property type="glycosylation" value="21 N-Linked glycans (1 site)"/>
</dbReference>
<dbReference type="GlyCosmos" id="P01266">
    <property type="glycosylation" value="21 sites, 20 glycans"/>
</dbReference>
<dbReference type="GlyGen" id="P01266">
    <property type="glycosylation" value="22 sites, 19 N-linked glycans (2 sites)"/>
</dbReference>
<dbReference type="iPTMnet" id="P01266"/>
<dbReference type="PhosphoSitePlus" id="P01266"/>
<dbReference type="BioMuta" id="TG"/>
<dbReference type="DMDM" id="126302607"/>
<dbReference type="jPOST" id="P01266"/>
<dbReference type="MassIVE" id="P01266"/>
<dbReference type="PaxDb" id="9606-ENSP00000220616"/>
<dbReference type="PeptideAtlas" id="P01266"/>
<dbReference type="ProteomicsDB" id="51364">
    <molecule id="P01266-1"/>
</dbReference>
<dbReference type="ProteomicsDB" id="51365">
    <molecule id="P01266-2"/>
</dbReference>
<dbReference type="ABCD" id="P01266">
    <property type="antibodies" value="7 sequenced antibodies"/>
</dbReference>
<dbReference type="Antibodypedia" id="860">
    <property type="antibodies" value="2013 antibodies from 43 providers"/>
</dbReference>
<dbReference type="DNASU" id="7038"/>
<dbReference type="Ensembl" id="ENST00000220616.9">
    <molecule id="P01266-1"/>
    <property type="protein sequence ID" value="ENSP00000220616.4"/>
    <property type="gene ID" value="ENSG00000042832.12"/>
</dbReference>
<dbReference type="GeneID" id="7038"/>
<dbReference type="KEGG" id="hsa:7038"/>
<dbReference type="MANE-Select" id="ENST00000220616.9">
    <property type="protein sequence ID" value="ENSP00000220616.4"/>
    <property type="RefSeq nucleotide sequence ID" value="NM_003235.5"/>
    <property type="RefSeq protein sequence ID" value="NP_003226.4"/>
</dbReference>
<dbReference type="UCSC" id="uc003ytw.4">
    <molecule id="P01266-1"/>
    <property type="organism name" value="human"/>
</dbReference>
<dbReference type="AGR" id="HGNC:11764"/>
<dbReference type="CTD" id="7038"/>
<dbReference type="DisGeNET" id="7038"/>
<dbReference type="GeneCards" id="TG"/>
<dbReference type="HGNC" id="HGNC:11764">
    <property type="gene designation" value="TG"/>
</dbReference>
<dbReference type="HPA" id="ENSG00000042832">
    <property type="expression patterns" value="Tissue enriched (thyroid)"/>
</dbReference>
<dbReference type="MalaCards" id="TG"/>
<dbReference type="MIM" id="188450">
    <property type="type" value="gene"/>
</dbReference>
<dbReference type="MIM" id="274700">
    <property type="type" value="phenotype"/>
</dbReference>
<dbReference type="MIM" id="608175">
    <property type="type" value="phenotype"/>
</dbReference>
<dbReference type="neXtProt" id="NX_P01266"/>
<dbReference type="OpenTargets" id="ENSG00000042832"/>
<dbReference type="Orphanet" id="95716">
    <property type="disease" value="Familial thyroid dyshormonogenesis"/>
</dbReference>
<dbReference type="PharmGKB" id="PA36479"/>
<dbReference type="VEuPathDB" id="HostDB:ENSG00000042832"/>
<dbReference type="eggNOG" id="KOG1214">
    <property type="taxonomic scope" value="Eukaryota"/>
</dbReference>
<dbReference type="GeneTree" id="ENSGT00940000159300"/>
<dbReference type="HOGENOM" id="CLU_000943_0_0_1"/>
<dbReference type="InParanoid" id="P01266"/>
<dbReference type="OMA" id="SIYVPQC"/>
<dbReference type="OrthoDB" id="6409105at2759"/>
<dbReference type="PAN-GO" id="P01266">
    <property type="GO annotations" value="2 GO annotations based on evolutionary models"/>
</dbReference>
<dbReference type="PhylomeDB" id="P01266"/>
<dbReference type="TreeFam" id="TF351833"/>
<dbReference type="BioCyc" id="MetaCyc:ENSG00000042832-MONOMER"/>
<dbReference type="PathwayCommons" id="P01266"/>
<dbReference type="SignaLink" id="P01266"/>
<dbReference type="SIGNOR" id="P01266"/>
<dbReference type="BioGRID-ORCS" id="7038">
    <property type="hits" value="12 hits in 1152 CRISPR screens"/>
</dbReference>
<dbReference type="ChiTaRS" id="TG">
    <property type="organism name" value="human"/>
</dbReference>
<dbReference type="GeneWiki" id="Thyroglobulin"/>
<dbReference type="GenomeRNAi" id="7038"/>
<dbReference type="Pharos" id="P01266">
    <property type="development level" value="Tbio"/>
</dbReference>
<dbReference type="PRO" id="PR:P01266"/>
<dbReference type="Proteomes" id="UP000005640">
    <property type="component" value="Chromosome 8"/>
</dbReference>
<dbReference type="RNAct" id="P01266">
    <property type="molecule type" value="protein"/>
</dbReference>
<dbReference type="Bgee" id="ENSG00000042832">
    <property type="expression patterns" value="Expressed in left lobe of thyroid gland and 105 other cell types or tissues"/>
</dbReference>
<dbReference type="ExpressionAtlas" id="P01266">
    <property type="expression patterns" value="baseline and differential"/>
</dbReference>
<dbReference type="GO" id="GO:0005576">
    <property type="term" value="C:extracellular region"/>
    <property type="evidence" value="ECO:0000303"/>
    <property type="project" value="UniProtKB"/>
</dbReference>
<dbReference type="GO" id="GO:0005615">
    <property type="term" value="C:extracellular space"/>
    <property type="evidence" value="ECO:0000314"/>
    <property type="project" value="UniProtKB"/>
</dbReference>
<dbReference type="GO" id="GO:0005179">
    <property type="term" value="F:hormone activity"/>
    <property type="evidence" value="ECO:0007669"/>
    <property type="project" value="UniProtKB-KW"/>
</dbReference>
<dbReference type="GO" id="GO:0042802">
    <property type="term" value="F:identical protein binding"/>
    <property type="evidence" value="ECO:0000314"/>
    <property type="project" value="UniProtKB"/>
</dbReference>
<dbReference type="GO" id="GO:0042446">
    <property type="term" value="P:hormone biosynthetic process"/>
    <property type="evidence" value="ECO:0007669"/>
    <property type="project" value="UniProtKB-KW"/>
</dbReference>
<dbReference type="GO" id="GO:0015705">
    <property type="term" value="P:iodide transport"/>
    <property type="evidence" value="ECO:0007669"/>
    <property type="project" value="Ensembl"/>
</dbReference>
<dbReference type="GO" id="GO:0031641">
    <property type="term" value="P:regulation of myelination"/>
    <property type="evidence" value="ECO:0007669"/>
    <property type="project" value="Ensembl"/>
</dbReference>
<dbReference type="GO" id="GO:0007165">
    <property type="term" value="P:signal transduction"/>
    <property type="evidence" value="ECO:0000303"/>
    <property type="project" value="ProtInc"/>
</dbReference>
<dbReference type="GO" id="GO:0030878">
    <property type="term" value="P:thyroid gland development"/>
    <property type="evidence" value="ECO:0000270"/>
    <property type="project" value="UniProtKB"/>
</dbReference>
<dbReference type="GO" id="GO:0006590">
    <property type="term" value="P:thyroid hormone generation"/>
    <property type="evidence" value="ECO:0000314"/>
    <property type="project" value="UniProtKB"/>
</dbReference>
<dbReference type="CDD" id="cd00191">
    <property type="entry name" value="TY"/>
    <property type="match status" value="8"/>
</dbReference>
<dbReference type="DisProt" id="DP02567"/>
<dbReference type="FunFam" id="4.10.800.10:FF:000004">
    <property type="entry name" value="SPARC-related modular calcium-binding protein 1"/>
    <property type="match status" value="1"/>
</dbReference>
<dbReference type="FunFam" id="2.10.50.10:FF:000047">
    <property type="entry name" value="Thyroglobulin"/>
    <property type="match status" value="1"/>
</dbReference>
<dbReference type="FunFam" id="3.40.50.1820:FF:000127">
    <property type="entry name" value="Thyroglobulin"/>
    <property type="match status" value="1"/>
</dbReference>
<dbReference type="FunFam" id="4.10.800.10:FF:000011">
    <property type="entry name" value="Thyroglobulin"/>
    <property type="match status" value="2"/>
</dbReference>
<dbReference type="FunFam" id="4.10.800.10:FF:000012">
    <property type="entry name" value="Thyroglobulin"/>
    <property type="match status" value="2"/>
</dbReference>
<dbReference type="FunFam" id="4.10.800.10:FF:000013">
    <property type="entry name" value="Thyroglobulin"/>
    <property type="match status" value="1"/>
</dbReference>
<dbReference type="FunFam" id="4.10.800.10:FF:000016">
    <property type="entry name" value="Thyroglobulin"/>
    <property type="match status" value="1"/>
</dbReference>
<dbReference type="FunFam" id="4.10.800.10:FF:000017">
    <property type="entry name" value="Thyroglobulin"/>
    <property type="match status" value="1"/>
</dbReference>
<dbReference type="Gene3D" id="3.40.50.1820">
    <property type="entry name" value="alpha/beta hydrolase"/>
    <property type="match status" value="1"/>
</dbReference>
<dbReference type="Gene3D" id="4.10.800.10">
    <property type="entry name" value="Thyroglobulin type-1"/>
    <property type="match status" value="10"/>
</dbReference>
<dbReference type="Gene3D" id="2.10.50.10">
    <property type="entry name" value="Tumor Necrosis Factor Receptor, subunit A, domain 2"/>
    <property type="match status" value="1"/>
</dbReference>
<dbReference type="InterPro" id="IPR029058">
    <property type="entry name" value="AB_hydrolase_fold"/>
</dbReference>
<dbReference type="InterPro" id="IPR002018">
    <property type="entry name" value="CarbesteraseB"/>
</dbReference>
<dbReference type="InterPro" id="IPR019819">
    <property type="entry name" value="Carboxylesterase_B_CS"/>
</dbReference>
<dbReference type="InterPro" id="IPR052001">
    <property type="entry name" value="MHC-II_Gamma/Thyroglobulin"/>
</dbReference>
<dbReference type="InterPro" id="IPR016324">
    <property type="entry name" value="Thyroglobulin"/>
</dbReference>
<dbReference type="InterPro" id="IPR000716">
    <property type="entry name" value="Thyroglobulin_1"/>
</dbReference>
<dbReference type="InterPro" id="IPR036857">
    <property type="entry name" value="Thyroglobulin_1_sf"/>
</dbReference>
<dbReference type="InterPro" id="IPR011641">
    <property type="entry name" value="Tyr-kin_ephrin_A/B_rcpt-like"/>
</dbReference>
<dbReference type="PANTHER" id="PTHR14093">
    <property type="entry name" value="HLA CLASS II GAMMA CHAIN"/>
    <property type="match status" value="1"/>
</dbReference>
<dbReference type="PANTHER" id="PTHR14093:SF19">
    <property type="entry name" value="THYROGLOBULIN"/>
    <property type="match status" value="1"/>
</dbReference>
<dbReference type="Pfam" id="PF00135">
    <property type="entry name" value="COesterase"/>
    <property type="match status" value="1"/>
</dbReference>
<dbReference type="Pfam" id="PF07699">
    <property type="entry name" value="Ephrin_rec_like"/>
    <property type="match status" value="1"/>
</dbReference>
<dbReference type="Pfam" id="PF00086">
    <property type="entry name" value="Thyroglobulin_1"/>
    <property type="match status" value="10"/>
</dbReference>
<dbReference type="PIRSF" id="PIRSF001831">
    <property type="entry name" value="Thyroglobulin"/>
    <property type="match status" value="1"/>
</dbReference>
<dbReference type="SMART" id="SM01411">
    <property type="entry name" value="Ephrin_rec_like"/>
    <property type="match status" value="1"/>
</dbReference>
<dbReference type="SMART" id="SM00211">
    <property type="entry name" value="TY"/>
    <property type="match status" value="10"/>
</dbReference>
<dbReference type="SUPFAM" id="SSF53474">
    <property type="entry name" value="alpha/beta-Hydrolases"/>
    <property type="match status" value="1"/>
</dbReference>
<dbReference type="SUPFAM" id="SSF57610">
    <property type="entry name" value="Thyroglobulin type-1 domain"/>
    <property type="match status" value="11"/>
</dbReference>
<dbReference type="PROSITE" id="PS00941">
    <property type="entry name" value="CARBOXYLESTERASE_B_2"/>
    <property type="match status" value="1"/>
</dbReference>
<dbReference type="PROSITE" id="PS00484">
    <property type="entry name" value="THYROGLOBULIN_1_1"/>
    <property type="match status" value="9"/>
</dbReference>
<dbReference type="PROSITE" id="PS51162">
    <property type="entry name" value="THYROGLOBULIN_1_2"/>
    <property type="match status" value="11"/>
</dbReference>
<accession>P01266</accession>
<accession>O15274</accession>
<accession>O43899</accession>
<accession>Q15593</accession>
<accession>Q15948</accession>
<accession>Q9NYR1</accession>
<accession>Q9NYR2</accession>
<accession>Q9UMZ0</accession>
<accession>Q9UNY3</accession>
<name>THYG_HUMAN</name>
<proteinExistence type="evidence at protein level"/>
<evidence type="ECO:0000250" key="1">
    <source>
        <dbReference type="UniProtKB" id="F1RRV3"/>
    </source>
</evidence>
<evidence type="ECO:0000250" key="2">
    <source>
        <dbReference type="UniProtKB" id="O08710"/>
    </source>
</evidence>
<evidence type="ECO:0000255" key="3">
    <source>
        <dbReference type="PROSITE-ProRule" id="PRU00500"/>
    </source>
</evidence>
<evidence type="ECO:0000256" key="4">
    <source>
        <dbReference type="SAM" id="MobiDB-lite"/>
    </source>
</evidence>
<evidence type="ECO:0000269" key="5">
    <source>
    </source>
</evidence>
<evidence type="ECO:0000269" key="6">
    <source>
    </source>
</evidence>
<evidence type="ECO:0000269" key="7">
    <source>
    </source>
</evidence>
<evidence type="ECO:0000269" key="8">
    <source>
    </source>
</evidence>
<evidence type="ECO:0000269" key="9">
    <source>
    </source>
</evidence>
<evidence type="ECO:0000269" key="10">
    <source>
    </source>
</evidence>
<evidence type="ECO:0000269" key="11">
    <source>
    </source>
</evidence>
<evidence type="ECO:0000269" key="12">
    <source>
    </source>
</evidence>
<evidence type="ECO:0000269" key="13">
    <source>
    </source>
</evidence>
<evidence type="ECO:0000269" key="14">
    <source>
    </source>
</evidence>
<evidence type="ECO:0000269" key="15">
    <source>
    </source>
</evidence>
<evidence type="ECO:0000269" key="16">
    <source>
    </source>
</evidence>
<evidence type="ECO:0000269" key="17">
    <source>
    </source>
</evidence>
<evidence type="ECO:0000269" key="18">
    <source>
    </source>
</evidence>
<evidence type="ECO:0000269" key="19">
    <source>
    </source>
</evidence>
<evidence type="ECO:0000269" key="20">
    <source>
    </source>
</evidence>
<evidence type="ECO:0000269" key="21">
    <source>
    </source>
</evidence>
<evidence type="ECO:0000269" key="22">
    <source>
    </source>
</evidence>
<evidence type="ECO:0000269" key="23">
    <source>
    </source>
</evidence>
<evidence type="ECO:0000269" key="24">
    <source>
    </source>
</evidence>
<evidence type="ECO:0000269" key="25">
    <source>
    </source>
</evidence>
<evidence type="ECO:0000269" key="26">
    <source>
    </source>
</evidence>
<evidence type="ECO:0000269" key="27">
    <source>
    </source>
</evidence>
<evidence type="ECO:0000303" key="28">
    <source>
    </source>
</evidence>
<evidence type="ECO:0000305" key="29"/>
<evidence type="ECO:0000305" key="30">
    <source>
    </source>
</evidence>
<evidence type="ECO:0000305" key="31">
    <source>
    </source>
</evidence>
<evidence type="ECO:0000312" key="32">
    <source>
        <dbReference type="HGNC" id="HGNC:11764"/>
    </source>
</evidence>
<evidence type="ECO:0000312" key="33">
    <source>
        <dbReference type="PDB" id="6SCJ"/>
    </source>
</evidence>
<evidence type="ECO:0007829" key="34">
    <source>
        <dbReference type="PDB" id="7B75"/>
    </source>
</evidence>
<comment type="function">
    <text evidence="15 19">Acts as a substrate for the production of iodinated thyroid hormones thyroxine (T4) and triiodothyronine (T3) (PubMed:17532758, PubMed:32025030). The synthesis of T3 and T4 involves iodination of selected tyrosine residues of TG/thyroglobulin followed by their oxidative coupling in the thyroid follicle lumen (PubMed:32025030). Following TG re-internalization and lysosomal-mediated proteolysis, T3 and T4 are released from the polypeptide backbone leading to their secretion into the bloodstream (PubMed:32025030). One dimer produces 7 thyroid hormone molecules (PubMed:32025030).</text>
</comment>
<comment type="subunit">
    <text evidence="19 25">Monomer (PubMed:32025030). Homodimer (via ChEL region); occurs in the endoplasmic reticulum and is required for export to the Golgi apparatus (PubMed:32025030). Homooligomer; disulfide-linked; stored in this form in the thyroid follicle lumen (PubMed:8626858).</text>
</comment>
<comment type="interaction">
    <interactant intactId="EBI-2800425">
        <id>P01266</id>
    </interactant>
    <interactant intactId="EBI-1057058">
        <id>Q99523</id>
        <label>SORT1</label>
    </interactant>
    <organismsDiffer>false</organismsDiffer>
    <experiments>3</experiments>
</comment>
<comment type="subcellular location">
    <subcellularLocation>
        <location evidence="8 16 25">Secreted</location>
    </subcellularLocation>
    <text evidence="8 16 25">Secreted into the thyroid follicle lumen (PubMed:19509106). Localizes to colloid globules, a structure formed in the thyroid follicle lumen consisting of cross-linked TG arranged in concentric layers (PubMed:11082042, PubMed:8626858).</text>
</comment>
<comment type="alternative products">
    <event type="alternative splicing"/>
    <isoform>
        <id>P01266-1</id>
        <name>1</name>
        <name>Major</name>
        <sequence type="displayed"/>
    </isoform>
    <isoform>
        <id>P01266-2</id>
        <name>2</name>
        <name>Minor</name>
        <sequence type="described" ref="VSP_012655"/>
    </isoform>
</comment>
<comment type="tissue specificity">
    <text evidence="8 16 25">Specifically expressed in the thyroid gland.</text>
</comment>
<comment type="domain">
    <text evidence="2">The cholinesterase-like (ChEL) region is required for dimerization and export from the endoplasmic reticulum.</text>
</comment>
<comment type="PTM">
    <text evidence="18 19">Iodinated on tyrosine residues by TPO (PubMed:2760035, PubMed:32025030). There are 4 pairs of iodinated tyrosines used for coupling: acceptor Tyr-24 is coupled to donor Tyr-149 or Tyr-234, acceptor Tyr-2573 is coupled to donor Tyr-2540, acceptor Tyr-2766 in monomer 1 is coupled to donor Tyr-2766 in monomer 2 and acceptor Tyr-1310 in monomer 1 is coupled to donor Tyr-108 in monomer 2 (PubMed:32025030).</text>
</comment>
<comment type="PTM">
    <text evidence="6">Sulfated tyrosines are desulfated during iodination.</text>
</comment>
<comment type="PTM">
    <text evidence="2">Undergoes sequential proteolysis by cathepsins to release thyroxine (T4) and triiodothyronine (T3) hormones. In the thyroid follicle lumen, cross-linked TG (storage form) is solubilized by limited proteolysis mediated by cathepsins CTSB and/or CTSL. Partially cleaved TG is further processed by CTSK/cathepsin K and/or CTSL resulting in the release of T4. Following endocytosis, further processing occurs leading to the release of T3 and more T4 hormones.</text>
</comment>
<comment type="disease" evidence="5 12 14 15 16 17">
    <disease id="DI-02526">
        <name>Thyroid dyshormonogenesis 3</name>
        <acronym>TDH3</acronym>
        <description>A disorder due to thyroid dyshormonogenesis, causing large goiters of elastic and soft consistency in the majority of patients. Although the degree of thyroid dysfunction varies considerably among patients with defective thyroglobulin synthesis, patients usually have a relatively high serum free triiodothyronine (T3) concentration with disproportionately low free tetraiodothyronine (T4) level. The maintenance of relatively high free T3 levels prevents profound tissue hypothyroidism except in brain and pituitary, which are dependent on T4 supply, resulting in neurologic and intellectual defects in some cases.</description>
        <dbReference type="MIM" id="274700"/>
    </disease>
    <text>The disease is caused by variants affecting the gene represented in this entry.</text>
</comment>
<comment type="disease" evidence="5 10">
    <disease id="DI-02878">
        <name>Autoimmune thyroid disease 3</name>
        <acronym>AITD3</acronym>
        <description>A complex autoimmune disorder comprising two related diseases affecting the thyroid: Graves disease and Hashimoto thyroiditis. In both disorders, thyroid-reactive T-cells are formed and infiltrate the thyroid gland. In Graves disease, the majority of the T-cells undergo a Th2 differentiation and activate B-cells to produce antibodies against the TSH receptor, which stimulate the thyroid and cause clinical hyperthyroidism. In contrast, Hashimoto thyroiditis is characterized by Th1 switching of the thyroid-infiltrating T-cells, which induces apoptosis of thyroid follicular cells and clinical hypothyroidism.</description>
        <dbReference type="MIM" id="608175"/>
    </disease>
    <text>Disease susceptibility is associated with variants affecting the gene represented in this entry.</text>
</comment>
<comment type="similarity">
    <text evidence="29">Belongs to the type-B carboxylesterase/lipase family.</text>
</comment>
<comment type="caution">
    <text evidence="29">The cholinesterase-like (ChEL) region lacks the Ser residue of the catalytic triad suggesting that it has no esterase activity.</text>
</comment>
<comment type="online information" name="Wikipedia">
    <link uri="https://en.wikipedia.org/wiki/Thyroglobulin"/>
    <text>Thyroglobulin entry</text>
</comment>